<keyword id="KW-0025">Alternative splicing</keyword>
<keyword id="KW-0067">ATP-binding</keyword>
<keyword id="KW-1003">Cell membrane</keyword>
<keyword id="KW-0225">Disease variant</keyword>
<keyword id="KW-0256">Endoplasmic reticulum</keyword>
<keyword id="KW-0325">Glycoprotein</keyword>
<keyword id="KW-0406">Ion transport</keyword>
<keyword id="KW-0472">Membrane</keyword>
<keyword id="KW-0547">Nucleotide-binding</keyword>
<keyword id="KW-0597">Phosphoprotein</keyword>
<keyword id="KW-1267">Proteomics identification</keyword>
<keyword id="KW-1185">Reference proteome</keyword>
<keyword id="KW-0915">Sodium</keyword>
<keyword id="KW-0739">Sodium transport</keyword>
<keyword id="KW-0769">Symport</keyword>
<keyword id="KW-0812">Transmembrane</keyword>
<keyword id="KW-1133">Transmembrane helix</keyword>
<keyword id="KW-0813">Transport</keyword>
<protein>
    <recommendedName>
        <fullName evidence="37">Organic cation/carnitine transporter 2</fullName>
    </recommendedName>
    <alternativeName>
        <fullName>High-affinity sodium-dependent carnitine cotransporter</fullName>
    </alternativeName>
    <alternativeName>
        <fullName>Solute carrier family 22 member 5</fullName>
    </alternativeName>
</protein>
<dbReference type="EMBL" id="AF057164">
    <property type="protein sequence ID" value="AAC24828.1"/>
    <property type="molecule type" value="mRNA"/>
</dbReference>
<dbReference type="EMBL" id="AB015050">
    <property type="protein sequence ID" value="BAA29023.1"/>
    <property type="molecule type" value="mRNA"/>
</dbReference>
<dbReference type="EMBL" id="AB016625">
    <property type="protein sequence ID" value="BAA36712.1"/>
    <property type="molecule type" value="Genomic_DNA"/>
</dbReference>
<dbReference type="EMBL" id="AB291606">
    <property type="protein sequence ID" value="BAF45812.1"/>
    <property type="molecule type" value="mRNA"/>
</dbReference>
<dbReference type="EMBL" id="AK128610">
    <property type="protein sequence ID" value="BAC87527.1"/>
    <property type="molecule type" value="mRNA"/>
</dbReference>
<dbReference type="EMBL" id="AK313230">
    <property type="protein sequence ID" value="BAG36041.1"/>
    <property type="molecule type" value="mRNA"/>
</dbReference>
<dbReference type="EMBL" id="AC118464">
    <property type="status" value="NOT_ANNOTATED_CDS"/>
    <property type="molecule type" value="Genomic_DNA"/>
</dbReference>
<dbReference type="EMBL" id="CH471062">
    <property type="protein sequence ID" value="EAW62337.1"/>
    <property type="molecule type" value="Genomic_DNA"/>
</dbReference>
<dbReference type="EMBL" id="CH471062">
    <property type="protein sequence ID" value="EAW62338.1"/>
    <property type="molecule type" value="Genomic_DNA"/>
</dbReference>
<dbReference type="EMBL" id="BC012325">
    <property type="protein sequence ID" value="AAH12325.1"/>
    <property type="molecule type" value="mRNA"/>
</dbReference>
<dbReference type="CCDS" id="CCDS4154.1">
    <molecule id="O76082-1"/>
</dbReference>
<dbReference type="CCDS" id="CCDS78058.1">
    <molecule id="O76082-3"/>
</dbReference>
<dbReference type="PIR" id="JW0089">
    <property type="entry name" value="JW0089"/>
</dbReference>
<dbReference type="RefSeq" id="NP_001295051.1">
    <molecule id="O76082-3"/>
    <property type="nucleotide sequence ID" value="NM_001308122.2"/>
</dbReference>
<dbReference type="RefSeq" id="NP_003051.1">
    <molecule id="O76082-1"/>
    <property type="nucleotide sequence ID" value="NM_003060.4"/>
</dbReference>
<dbReference type="SMR" id="O76082"/>
<dbReference type="BioGRID" id="112471">
    <property type="interactions" value="29"/>
</dbReference>
<dbReference type="FunCoup" id="O76082">
    <property type="interactions" value="316"/>
</dbReference>
<dbReference type="IntAct" id="O76082">
    <property type="interactions" value="17"/>
</dbReference>
<dbReference type="MINT" id="O76082"/>
<dbReference type="STRING" id="9606.ENSP00000402760"/>
<dbReference type="BindingDB" id="O76082"/>
<dbReference type="ChEMBL" id="CHEMBL2073693"/>
<dbReference type="DrugBank" id="DB08842">
    <property type="generic name" value="Acetylcarnitine"/>
</dbReference>
<dbReference type="DrugBank" id="DB03128">
    <property type="generic name" value="Acetylcholine"/>
</dbReference>
<dbReference type="DrugBank" id="DB04630">
    <property type="generic name" value="Aldosterone"/>
</dbReference>
<dbReference type="DrugBank" id="DB00345">
    <property type="generic name" value="Aminohippuric acid"/>
</dbReference>
<dbReference type="DrugBank" id="DB00182">
    <property type="generic name" value="Amphetamine"/>
</dbReference>
<dbReference type="DrugBank" id="DB00415">
    <property type="generic name" value="Ampicillin"/>
</dbReference>
<dbReference type="DrugBank" id="DB00125">
    <property type="generic name" value="Arginine"/>
</dbReference>
<dbReference type="DrugBank" id="DB08795">
    <property type="generic name" value="Azidocillin"/>
</dbReference>
<dbReference type="DrugBank" id="DB01053">
    <property type="generic name" value="Benzylpenicillin"/>
</dbReference>
<dbReference type="DrugBank" id="DB01140">
    <property type="generic name" value="Cefadroxil"/>
</dbReference>
<dbReference type="DrugBank" id="DB00456">
    <property type="generic name" value="Cefalotin"/>
</dbReference>
<dbReference type="DrugBank" id="DB00535">
    <property type="generic name" value="Cefdinir"/>
</dbReference>
<dbReference type="DrugBank" id="DB01413">
    <property type="generic name" value="Cefepime"/>
</dbReference>
<dbReference type="DrugBank" id="DB01333">
    <property type="generic name" value="Cefradine"/>
</dbReference>
<dbReference type="DrugBank" id="DB00567">
    <property type="generic name" value="Cephalexin"/>
</dbReference>
<dbReference type="DrugBank" id="DB00689">
    <property type="generic name" value="Cephaloglycin"/>
</dbReference>
<dbReference type="DrugBank" id="DB00122">
    <property type="generic name" value="Choline"/>
</dbReference>
<dbReference type="DrugBank" id="DB14006">
    <property type="generic name" value="Choline salicylate"/>
</dbReference>
<dbReference type="DrugBank" id="DB00501">
    <property type="generic name" value="Cimetidine"/>
</dbReference>
<dbReference type="DrugBank" id="DB00575">
    <property type="generic name" value="Clonidine"/>
</dbReference>
<dbReference type="DrugBank" id="DB00148">
    <property type="generic name" value="Creatine"/>
</dbReference>
<dbReference type="DrugBank" id="DB01000">
    <property type="generic name" value="Cyclacillin"/>
</dbReference>
<dbReference type="DrugBank" id="DB00970">
    <property type="generic name" value="Dactinomycin"/>
</dbReference>
<dbReference type="DrugBank" id="DB04133">
    <property type="generic name" value="Degraded Cephaloridine"/>
</dbReference>
<dbReference type="DrugBank" id="DB01151">
    <property type="generic name" value="Desipramine"/>
</dbReference>
<dbReference type="DrugBank" id="DB01075">
    <property type="generic name" value="Diphenhydramine"/>
</dbReference>
<dbReference type="DrugBank" id="DB00988">
    <property type="generic name" value="Dopamine"/>
</dbReference>
<dbReference type="DrugBank" id="DB00983">
    <property type="generic name" value="Formoterol"/>
</dbReference>
<dbReference type="DrugBank" id="DB00695">
    <property type="generic name" value="Furosemide"/>
</dbReference>
<dbReference type="DrugBank" id="DB00365">
    <property type="generic name" value="Grepafloxacin"/>
</dbReference>
<dbReference type="DrugBank" id="DB00536">
    <property type="generic name" value="Guanidine"/>
</dbReference>
<dbReference type="DrugBank" id="DB05381">
    <property type="generic name" value="Histamine"/>
</dbReference>
<dbReference type="DrugBank" id="DB01005">
    <property type="generic name" value="Hydroxyurea"/>
</dbReference>
<dbReference type="DrugBank" id="DB00619">
    <property type="generic name" value="Imatinib"/>
</dbReference>
<dbReference type="DrugBank" id="DB00332">
    <property type="generic name" value="Ipratropium"/>
</dbReference>
<dbReference type="DrugBank" id="DB09237">
    <property type="generic name" value="Levamlodipine"/>
</dbReference>
<dbReference type="DrugBank" id="DB00583">
    <property type="generic name" value="Levocarnitine"/>
</dbReference>
<dbReference type="DrugBank" id="DB00281">
    <property type="generic name" value="Lidocaine"/>
</dbReference>
<dbReference type="DrugBank" id="DB00978">
    <property type="generic name" value="Lomefloxacin"/>
</dbReference>
<dbReference type="DrugBank" id="DB06691">
    <property type="generic name" value="Mepyramine"/>
</dbReference>
<dbReference type="DrugBank" id="DB01577">
    <property type="generic name" value="Metamfetamine"/>
</dbReference>
<dbReference type="DrugBank" id="DB06709">
    <property type="generic name" value="Methacholine"/>
</dbReference>
<dbReference type="DrugBank" id="DB00627">
    <property type="generic name" value="Niacin"/>
</dbReference>
<dbReference type="DrugBank" id="DB00184">
    <property type="generic name" value="Nicotine"/>
</dbReference>
<dbReference type="DrugBank" id="DB00368">
    <property type="generic name" value="Norepinephrine"/>
</dbReference>
<dbReference type="DrugBank" id="DB01059">
    <property type="generic name" value="Norfloxacin"/>
</dbReference>
<dbReference type="DrugBank" id="DB01165">
    <property type="generic name" value="Ofloxacin"/>
</dbReference>
<dbReference type="DrugBank" id="DB01032">
    <property type="generic name" value="Probenecid"/>
</dbReference>
<dbReference type="DrugBank" id="DB01035">
    <property type="generic name" value="Procainamide"/>
</dbReference>
<dbReference type="DrugBank" id="DB00908">
    <property type="generic name" value="Quinidine"/>
</dbReference>
<dbReference type="DrugBank" id="DB00468">
    <property type="generic name" value="Quinine"/>
</dbReference>
<dbReference type="DrugBank" id="DB14754">
    <property type="generic name" value="Solriamfetol"/>
</dbReference>
<dbReference type="DrugBank" id="DB01208">
    <property type="generic name" value="Sparfloxacin"/>
</dbReference>
<dbReference type="DrugBank" id="DB00871">
    <property type="generic name" value="Terbutaline"/>
</dbReference>
<dbReference type="DrugBank" id="DB08837">
    <property type="generic name" value="Tetraethylammonium"/>
</dbReference>
<dbReference type="DrugBank" id="DB00152">
    <property type="generic name" value="Thiamine"/>
</dbReference>
<dbReference type="DrugBank" id="DB01409">
    <property type="generic name" value="Tiotropium"/>
</dbReference>
<dbReference type="DrugBank" id="DB00313">
    <property type="generic name" value="Valproic acid"/>
</dbReference>
<dbReference type="DrugBank" id="DB00661">
    <property type="generic name" value="Verapamil"/>
</dbReference>
<dbReference type="TCDB" id="2.A.1.19.3">
    <property type="family name" value="the major facilitator superfamily (mfs)"/>
</dbReference>
<dbReference type="GlyCosmos" id="O76082">
    <property type="glycosylation" value="3 sites, No reported glycans"/>
</dbReference>
<dbReference type="GlyGen" id="O76082">
    <property type="glycosylation" value="4 sites, 5 N-linked glycans (3 sites), 1 O-linked glycan (1 site)"/>
</dbReference>
<dbReference type="iPTMnet" id="O76082"/>
<dbReference type="PhosphoSitePlus" id="O76082"/>
<dbReference type="BioMuta" id="SLC22A5"/>
<dbReference type="jPOST" id="O76082"/>
<dbReference type="MassIVE" id="O76082"/>
<dbReference type="PaxDb" id="9606-ENSP00000245407"/>
<dbReference type="PeptideAtlas" id="O76082"/>
<dbReference type="ProteomicsDB" id="50388">
    <molecule id="O76082-1"/>
</dbReference>
<dbReference type="ProteomicsDB" id="50389">
    <molecule id="O76082-2"/>
</dbReference>
<dbReference type="ProteomicsDB" id="50390">
    <molecule id="O76082-3"/>
</dbReference>
<dbReference type="Pumba" id="O76082"/>
<dbReference type="Antibodypedia" id="45160">
    <property type="antibodies" value="171 antibodies from 30 providers"/>
</dbReference>
<dbReference type="DNASU" id="6584"/>
<dbReference type="Ensembl" id="ENST00000245407.8">
    <molecule id="O76082-1"/>
    <property type="protein sequence ID" value="ENSP00000245407.3"/>
    <property type="gene ID" value="ENSG00000197375.14"/>
</dbReference>
<dbReference type="Ensembl" id="ENST00000435065.7">
    <molecule id="O76082-3"/>
    <property type="protein sequence ID" value="ENSP00000402760.2"/>
    <property type="gene ID" value="ENSG00000197375.14"/>
</dbReference>
<dbReference type="GeneID" id="6584"/>
<dbReference type="KEGG" id="hsa:6584"/>
<dbReference type="MANE-Select" id="ENST00000245407.8">
    <property type="protein sequence ID" value="ENSP00000245407.3"/>
    <property type="RefSeq nucleotide sequence ID" value="NM_003060.4"/>
    <property type="RefSeq protein sequence ID" value="NP_003051.1"/>
</dbReference>
<dbReference type="UCSC" id="uc003kww.5">
    <molecule id="O76082-1"/>
    <property type="organism name" value="human"/>
</dbReference>
<dbReference type="AGR" id="HGNC:10969"/>
<dbReference type="CTD" id="6584"/>
<dbReference type="DisGeNET" id="6584"/>
<dbReference type="GeneCards" id="SLC22A5"/>
<dbReference type="GeneReviews" id="SLC22A5"/>
<dbReference type="HGNC" id="HGNC:10969">
    <property type="gene designation" value="SLC22A5"/>
</dbReference>
<dbReference type="HPA" id="ENSG00000197375">
    <property type="expression patterns" value="Tissue enhanced (skeletal)"/>
</dbReference>
<dbReference type="MalaCards" id="SLC22A5"/>
<dbReference type="MIM" id="212140">
    <property type="type" value="phenotype"/>
</dbReference>
<dbReference type="MIM" id="603377">
    <property type="type" value="gene"/>
</dbReference>
<dbReference type="neXtProt" id="NX_O76082"/>
<dbReference type="OpenTargets" id="ENSG00000197375"/>
<dbReference type="Orphanet" id="158">
    <property type="disease" value="Systemic primary carnitine deficiency"/>
</dbReference>
<dbReference type="PharmGKB" id="PA333"/>
<dbReference type="VEuPathDB" id="HostDB:ENSG00000197375"/>
<dbReference type="eggNOG" id="KOG0255">
    <property type="taxonomic scope" value="Eukaryota"/>
</dbReference>
<dbReference type="GeneTree" id="ENSGT00940000154155"/>
<dbReference type="HOGENOM" id="CLU_001265_33_4_1"/>
<dbReference type="InParanoid" id="O76082"/>
<dbReference type="OMA" id="RIIYCTL"/>
<dbReference type="OrthoDB" id="3936150at2759"/>
<dbReference type="PAN-GO" id="O76082">
    <property type="GO annotations" value="0 GO annotations based on evolutionary models"/>
</dbReference>
<dbReference type="PhylomeDB" id="O76082"/>
<dbReference type="TreeFam" id="TF315847"/>
<dbReference type="PathwayCommons" id="O76082"/>
<dbReference type="Reactome" id="R-HSA-200425">
    <property type="pathway name" value="Carnitine shuttle"/>
</dbReference>
<dbReference type="Reactome" id="R-HSA-549127">
    <property type="pathway name" value="Organic cation transport"/>
</dbReference>
<dbReference type="Reactome" id="R-HSA-5619053">
    <property type="pathway name" value="Defective SLC22A5 causes systemic primary carnitine deficiency (CDSP)"/>
</dbReference>
<dbReference type="SignaLink" id="O76082"/>
<dbReference type="BioGRID-ORCS" id="6584">
    <property type="hits" value="13 hits in 1158 CRISPR screens"/>
</dbReference>
<dbReference type="ChiTaRS" id="SLC22A5">
    <property type="organism name" value="human"/>
</dbReference>
<dbReference type="GeneWiki" id="SLC22A5"/>
<dbReference type="GenomeRNAi" id="6584"/>
<dbReference type="Pharos" id="O76082">
    <property type="development level" value="Tbio"/>
</dbReference>
<dbReference type="PRO" id="PR:O76082"/>
<dbReference type="Proteomes" id="UP000005640">
    <property type="component" value="Chromosome 5"/>
</dbReference>
<dbReference type="RNAct" id="O76082">
    <property type="molecule type" value="protein"/>
</dbReference>
<dbReference type="Bgee" id="ENSG00000197375">
    <property type="expression patterns" value="Expressed in gastrocnemius and 147 other cell types or tissues"/>
</dbReference>
<dbReference type="ExpressionAtlas" id="O76082">
    <property type="expression patterns" value="baseline and differential"/>
</dbReference>
<dbReference type="GO" id="GO:0016324">
    <property type="term" value="C:apical plasma membrane"/>
    <property type="evidence" value="ECO:0000314"/>
    <property type="project" value="UniProtKB"/>
</dbReference>
<dbReference type="GO" id="GO:0009925">
    <property type="term" value="C:basal plasma membrane"/>
    <property type="evidence" value="ECO:0000314"/>
    <property type="project" value="UniProtKB"/>
</dbReference>
<dbReference type="GO" id="GO:0031526">
    <property type="term" value="C:brush border membrane"/>
    <property type="evidence" value="ECO:0000314"/>
    <property type="project" value="BHF-UCL"/>
</dbReference>
<dbReference type="GO" id="GO:0005737">
    <property type="term" value="C:cytoplasm"/>
    <property type="evidence" value="ECO:0000250"/>
    <property type="project" value="ARUK-UCL"/>
</dbReference>
<dbReference type="GO" id="GO:0005829">
    <property type="term" value="C:cytosol"/>
    <property type="evidence" value="ECO:0000250"/>
    <property type="project" value="ARUK-UCL"/>
</dbReference>
<dbReference type="GO" id="GO:0005783">
    <property type="term" value="C:endoplasmic reticulum"/>
    <property type="evidence" value="ECO:0000314"/>
    <property type="project" value="UniProtKB"/>
</dbReference>
<dbReference type="GO" id="GO:0070062">
    <property type="term" value="C:extracellular exosome"/>
    <property type="evidence" value="ECO:0007005"/>
    <property type="project" value="UniProtKB"/>
</dbReference>
<dbReference type="GO" id="GO:0005886">
    <property type="term" value="C:plasma membrane"/>
    <property type="evidence" value="ECO:0000314"/>
    <property type="project" value="UniProtKB"/>
</dbReference>
<dbReference type="GO" id="GO:1901235">
    <property type="term" value="F:(R)-carnitine transmembrane transporter activity"/>
    <property type="evidence" value="ECO:0000314"/>
    <property type="project" value="UniProtKB"/>
</dbReference>
<dbReference type="GO" id="GO:0015199">
    <property type="term" value="F:amino-acid betaine transmembrane transporter activity"/>
    <property type="evidence" value="ECO:0000314"/>
    <property type="project" value="UniProtKB"/>
</dbReference>
<dbReference type="GO" id="GO:0005524">
    <property type="term" value="F:ATP binding"/>
    <property type="evidence" value="ECO:0007669"/>
    <property type="project" value="UniProtKB-KW"/>
</dbReference>
<dbReference type="GO" id="GO:0015226">
    <property type="term" value="F:carnitine transmembrane transporter activity"/>
    <property type="evidence" value="ECO:0000314"/>
    <property type="project" value="UniProtKB"/>
</dbReference>
<dbReference type="GO" id="GO:0030165">
    <property type="term" value="F:PDZ domain binding"/>
    <property type="evidence" value="ECO:0000353"/>
    <property type="project" value="BHF-UCL"/>
</dbReference>
<dbReference type="GO" id="GO:0015651">
    <property type="term" value="F:quaternary ammonium group transmembrane transporter activity"/>
    <property type="evidence" value="ECO:0000314"/>
    <property type="project" value="ARUK-UCL"/>
</dbReference>
<dbReference type="GO" id="GO:0015293">
    <property type="term" value="F:symporter activity"/>
    <property type="evidence" value="ECO:0007669"/>
    <property type="project" value="UniProtKB-KW"/>
</dbReference>
<dbReference type="GO" id="GO:0042910">
    <property type="term" value="F:xenobiotic transmembrane transporter activity"/>
    <property type="evidence" value="ECO:0000305"/>
    <property type="project" value="BHF-UCL"/>
</dbReference>
<dbReference type="GO" id="GO:1902270">
    <property type="term" value="P:(R)-carnitine transmembrane transport"/>
    <property type="evidence" value="ECO:0000314"/>
    <property type="project" value="UniProtKB"/>
</dbReference>
<dbReference type="GO" id="GO:1900749">
    <property type="term" value="P:(R)-carnitine transport"/>
    <property type="evidence" value="ECO:0000314"/>
    <property type="project" value="UniProtKB"/>
</dbReference>
<dbReference type="GO" id="GO:1902603">
    <property type="term" value="P:carnitine transmembrane transport"/>
    <property type="evidence" value="ECO:0000314"/>
    <property type="project" value="BHF-UCL"/>
</dbReference>
<dbReference type="GO" id="GO:0015879">
    <property type="term" value="P:carnitine transport"/>
    <property type="evidence" value="ECO:0000314"/>
    <property type="project" value="BHF-UCL"/>
</dbReference>
<dbReference type="GO" id="GO:0060731">
    <property type="term" value="P:positive regulation of intestinal epithelial structure maintenance"/>
    <property type="evidence" value="ECO:0000315"/>
    <property type="project" value="BHF-UCL"/>
</dbReference>
<dbReference type="GO" id="GO:0015697">
    <property type="term" value="P:quaternary ammonium group transport"/>
    <property type="evidence" value="ECO:0000314"/>
    <property type="project" value="ARUK-UCL"/>
</dbReference>
<dbReference type="GO" id="GO:0009609">
    <property type="term" value="P:response to symbiotic bacterium"/>
    <property type="evidence" value="ECO:0000315"/>
    <property type="project" value="BHF-UCL"/>
</dbReference>
<dbReference type="GO" id="GO:0034612">
    <property type="term" value="P:response to tumor necrosis factor"/>
    <property type="evidence" value="ECO:0000314"/>
    <property type="project" value="UniProtKB"/>
</dbReference>
<dbReference type="GO" id="GO:0034341">
    <property type="term" value="P:response to type II interferon"/>
    <property type="evidence" value="ECO:0000314"/>
    <property type="project" value="UniProtKB"/>
</dbReference>
<dbReference type="GO" id="GO:0006814">
    <property type="term" value="P:sodium ion transport"/>
    <property type="evidence" value="ECO:0007669"/>
    <property type="project" value="UniProtKB-KW"/>
</dbReference>
<dbReference type="GO" id="GO:0070715">
    <property type="term" value="P:sodium-dependent organic cation transport"/>
    <property type="evidence" value="ECO:0000314"/>
    <property type="project" value="BHF-UCL"/>
</dbReference>
<dbReference type="GO" id="GO:0150104">
    <property type="term" value="P:transport across blood-brain barrier"/>
    <property type="evidence" value="ECO:0000250"/>
    <property type="project" value="ARUK-UCL"/>
</dbReference>
<dbReference type="GO" id="GO:1990961">
    <property type="term" value="P:xenobiotic detoxification by transmembrane export across the plasma membrane"/>
    <property type="evidence" value="ECO:0000305"/>
    <property type="project" value="BHF-UCL"/>
</dbReference>
<dbReference type="CDD" id="cd17376">
    <property type="entry name" value="MFS_SLC22A4_5_OCTN1_2"/>
    <property type="match status" value="1"/>
</dbReference>
<dbReference type="FunFam" id="1.20.1250.20:FF:000070">
    <property type="entry name" value="Solute carrier family 22 member 5"/>
    <property type="match status" value="1"/>
</dbReference>
<dbReference type="Gene3D" id="1.20.1250.20">
    <property type="entry name" value="MFS general substrate transporter like domains"/>
    <property type="match status" value="1"/>
</dbReference>
<dbReference type="InterPro" id="IPR020846">
    <property type="entry name" value="MFS_dom"/>
</dbReference>
<dbReference type="InterPro" id="IPR005828">
    <property type="entry name" value="MFS_sugar_transport-like"/>
</dbReference>
<dbReference type="InterPro" id="IPR036259">
    <property type="entry name" value="MFS_trans_sf"/>
</dbReference>
<dbReference type="InterPro" id="IPR004749">
    <property type="entry name" value="Orgcat_transp/SVOP"/>
</dbReference>
<dbReference type="InterPro" id="IPR045915">
    <property type="entry name" value="S22A4/5"/>
</dbReference>
<dbReference type="InterPro" id="IPR005829">
    <property type="entry name" value="Sugar_transporter_CS"/>
</dbReference>
<dbReference type="NCBIfam" id="TIGR00898">
    <property type="entry name" value="2A0119"/>
    <property type="match status" value="1"/>
</dbReference>
<dbReference type="PANTHER" id="PTHR24064">
    <property type="entry name" value="SOLUTE CARRIER FAMILY 22 MEMBER"/>
    <property type="match status" value="1"/>
</dbReference>
<dbReference type="Pfam" id="PF00083">
    <property type="entry name" value="Sugar_tr"/>
    <property type="match status" value="1"/>
</dbReference>
<dbReference type="SUPFAM" id="SSF103473">
    <property type="entry name" value="MFS general substrate transporter"/>
    <property type="match status" value="1"/>
</dbReference>
<dbReference type="PROSITE" id="PS50850">
    <property type="entry name" value="MFS"/>
    <property type="match status" value="1"/>
</dbReference>
<dbReference type="PROSITE" id="PS00216">
    <property type="entry name" value="SUGAR_TRANSPORT_1"/>
    <property type="match status" value="1"/>
</dbReference>
<evidence type="ECO:0000250" key="1">
    <source>
        <dbReference type="UniProtKB" id="Q9Z0E8"/>
    </source>
</evidence>
<evidence type="ECO:0000255" key="2"/>
<evidence type="ECO:0000256" key="3">
    <source>
        <dbReference type="SAM" id="MobiDB-lite"/>
    </source>
</evidence>
<evidence type="ECO:0000269" key="4">
    <source>
    </source>
</evidence>
<evidence type="ECO:0000269" key="5">
    <source>
    </source>
</evidence>
<evidence type="ECO:0000269" key="6">
    <source>
    </source>
</evidence>
<evidence type="ECO:0000269" key="7">
    <source>
    </source>
</evidence>
<evidence type="ECO:0000269" key="8">
    <source>
    </source>
</evidence>
<evidence type="ECO:0000269" key="9">
    <source>
    </source>
</evidence>
<evidence type="ECO:0000269" key="10">
    <source>
    </source>
</evidence>
<evidence type="ECO:0000269" key="11">
    <source>
    </source>
</evidence>
<evidence type="ECO:0000269" key="12">
    <source>
    </source>
</evidence>
<evidence type="ECO:0000269" key="13">
    <source>
    </source>
</evidence>
<evidence type="ECO:0000269" key="14">
    <source>
    </source>
</evidence>
<evidence type="ECO:0000269" key="15">
    <source>
    </source>
</evidence>
<evidence type="ECO:0000269" key="16">
    <source>
    </source>
</evidence>
<evidence type="ECO:0000269" key="17">
    <source>
    </source>
</evidence>
<evidence type="ECO:0000269" key="18">
    <source>
    </source>
</evidence>
<evidence type="ECO:0000269" key="19">
    <source>
    </source>
</evidence>
<evidence type="ECO:0000269" key="20">
    <source>
    </source>
</evidence>
<evidence type="ECO:0000269" key="21">
    <source>
    </source>
</evidence>
<evidence type="ECO:0000269" key="22">
    <source>
    </source>
</evidence>
<evidence type="ECO:0000269" key="23">
    <source>
    </source>
</evidence>
<evidence type="ECO:0000269" key="24">
    <source>
    </source>
</evidence>
<evidence type="ECO:0000269" key="25">
    <source>
    </source>
</evidence>
<evidence type="ECO:0000269" key="26">
    <source>
    </source>
</evidence>
<evidence type="ECO:0000269" key="27">
    <source>
    </source>
</evidence>
<evidence type="ECO:0000269" key="28">
    <source>
    </source>
</evidence>
<evidence type="ECO:0000269" key="29">
    <source>
    </source>
</evidence>
<evidence type="ECO:0000269" key="30">
    <source>
    </source>
</evidence>
<evidence type="ECO:0000269" key="31">
    <source>
    </source>
</evidence>
<evidence type="ECO:0000269" key="32">
    <source>
    </source>
</evidence>
<evidence type="ECO:0000303" key="33">
    <source>
    </source>
</evidence>
<evidence type="ECO:0000303" key="34">
    <source>
    </source>
</evidence>
<evidence type="ECO:0000303" key="35">
    <source>
    </source>
</evidence>
<evidence type="ECO:0000303" key="36">
    <source>
    </source>
</evidence>
<evidence type="ECO:0000305" key="37"/>
<evidence type="ECO:0000305" key="38">
    <source>
    </source>
</evidence>
<evidence type="ECO:0000305" key="39">
    <source>
    </source>
</evidence>
<evidence type="ECO:0000312" key="40">
    <source>
        <dbReference type="HGNC" id="HGNC:10969"/>
    </source>
</evidence>
<evidence type="ECO:0007744" key="41">
    <source>
    </source>
</evidence>
<evidence type="ECO:0007744" key="42">
    <source>
    </source>
</evidence>
<comment type="function">
    <text evidence="6 8 13 20 22 27 39">Sodium-ion dependent, high affinity carnitine transporter. Involved in the active cellular uptake of carnitine. Transports one sodium ion with one molecule of carnitine (PubMed:10454528, PubMed:10525100, PubMed:10966938, PubMed:17509700, PubMed:20722056, PubMed:33124720). Also transports organic cations such as tetraethylammonium (TEA) without the involvement of sodium. Relative uptake activity ratio of carnitine to TEA is 11.3 (PubMed:10454528, PubMed:10525100, PubMed:10966938). In intestinal epithelia, transports the quorum-sensing pentapeptide CSF (competence and sporulation factor) from B.subtilis which induces cytoprotective heat shock proteins contributing to intestinal homeostasis (PubMed:18005709). May also contribute to regulate the transport of organic compounds in testis across the blood-testis-barrier (Probable).</text>
</comment>
<comment type="function">
    <molecule>Isoform 3</molecule>
    <text evidence="20">Retained in the ER, unable to perform carnitine uptake.</text>
</comment>
<comment type="catalytic activity">
    <reaction evidence="6 8 20 21 27 30">
        <text>(R)-carnitine(out) + Na(+)(out) = (R)-carnitine(in) + Na(+)(in)</text>
        <dbReference type="Rhea" id="RHEA:72091"/>
        <dbReference type="ChEBI" id="CHEBI:16347"/>
        <dbReference type="ChEBI" id="CHEBI:29101"/>
    </reaction>
</comment>
<comment type="catalytic activity">
    <reaction evidence="13 30">
        <text>glycine betaine(out) + Na(+)(out) = glycine betaine(in) + Na(+)(in)</text>
        <dbReference type="Rhea" id="RHEA:72115"/>
        <dbReference type="ChEBI" id="CHEBI:17750"/>
        <dbReference type="ChEBI" id="CHEBI:29101"/>
    </reaction>
</comment>
<comment type="catalytic activity">
    <reaction evidence="13">
        <text>glycine betaine(out) + (R)-carnitine(in) = glycine betaine(in) + (R)-carnitine(out)</text>
        <dbReference type="Rhea" id="RHEA:72119"/>
        <dbReference type="ChEBI" id="CHEBI:16347"/>
        <dbReference type="ChEBI" id="CHEBI:17750"/>
    </reaction>
</comment>
<comment type="catalytic activity">
    <reaction evidence="21">
        <text>O-butanoyl-(R)-carnitine(out) + Na(+)(out) = O-butanoyl-(R)-carnitine(in) + Na(+)(in)</text>
        <dbReference type="Rhea" id="RHEA:72123"/>
        <dbReference type="ChEBI" id="CHEBI:21949"/>
        <dbReference type="ChEBI" id="CHEBI:29101"/>
    </reaction>
</comment>
<comment type="catalytic activity">
    <reaction evidence="6 8">
        <text>O-acetyl-(R)-carnitine(out) + Na(+)(out) = O-acetyl-(R)-carnitine(in) + Na(+)(in)</text>
        <dbReference type="Rhea" id="RHEA:72099"/>
        <dbReference type="ChEBI" id="CHEBI:29101"/>
        <dbReference type="ChEBI" id="CHEBI:57589"/>
    </reaction>
</comment>
<comment type="catalytic activity">
    <reaction evidence="6">
        <text>O-propanoyl-(R)-carnitine(out) + Na(+)(out) = O-propanoyl-(R)-carnitine(in) + Na(+)(in)</text>
        <dbReference type="Rhea" id="RHEA:72103"/>
        <dbReference type="ChEBI" id="CHEBI:29101"/>
        <dbReference type="ChEBI" id="CHEBI:53210"/>
    </reaction>
</comment>
<comment type="catalytic activity">
    <reaction evidence="8">
        <text>(S)-carnitine(out) + Na(+)(out) = (S)-carnitine(in) + Na(+)(in)</text>
        <dbReference type="Rhea" id="RHEA:72095"/>
        <dbReference type="ChEBI" id="CHEBI:11060"/>
        <dbReference type="ChEBI" id="CHEBI:29101"/>
    </reaction>
</comment>
<comment type="catalytic activity">
    <reaction evidence="38">
        <text>an O-acyl-(R)-carnitine(out) + Na(+)(out) = an O-acyl-(R)-carnitine(in) + Na(+)(in)</text>
        <dbReference type="Rhea" id="RHEA:72107"/>
        <dbReference type="ChEBI" id="CHEBI:29101"/>
        <dbReference type="ChEBI" id="CHEBI:75659"/>
    </reaction>
</comment>
<comment type="catalytic activity">
    <reaction evidence="22">
        <text>L-glutamyl-L-arginyl-glycyl-L-methionyl-L-threonine(out) + Na(+)(out) = L-glutamyl-L-arginyl-glycyl-L-methionyl-L-threonine(in) + Na(+)(in)</text>
        <dbReference type="Rhea" id="RHEA:72111"/>
        <dbReference type="ChEBI" id="CHEBI:29101"/>
        <dbReference type="ChEBI" id="CHEBI:191852"/>
    </reaction>
</comment>
<comment type="catalytic activity">
    <reaction evidence="30">
        <text>N,N-dimethylglycine(out) + Na(+)(out) = N,N-dimethylglycine(in) + Na(+)(in)</text>
        <dbReference type="Rhea" id="RHEA:76591"/>
        <dbReference type="ChEBI" id="CHEBI:29101"/>
        <dbReference type="ChEBI" id="CHEBI:58251"/>
    </reaction>
</comment>
<comment type="activity regulation">
    <text evidence="13 31">Inhibited by emetine, quinidine and verapamil. The IC(50) of emetine is 4.2 uM. Not inhibited by valproic acid (PubMed:10966938). Transport of (R)-carnitine is stimulated by cholesterol in the plasma membrane (PubMed:33334877).</text>
</comment>
<comment type="biophysicochemical properties">
    <kinetics>
        <KM evidence="8">4.3 uM for (R)-carnitine</KM>
        <KM evidence="13">4.8 uM for (R)-carnitine (at -60 mV holding potential)</KM>
        <KM evidence="13">2.58 uM for (R)-carnitine (at -90 mV holding potential)</KM>
        <KM evidence="31">19.9 uM for (R)-carnitine</KM>
        <KM evidence="8">8.5 uM for O-acetyl-(R)-carnitine</KM>
        <KM evidence="8">10.9 uM for (S)-carnitine</KM>
        <KM evidence="13">98.3 uM for (S)-carnitine</KM>
        <KM evidence="8">18.5 uM for Na(+)</KM>
        <Vmax evidence="31">0.63 pmol/min/ug enzyme</Vmax>
    </kinetics>
    <phDependence>
        <text evidence="8 13">Optimum pH is from 7 to 8.5.</text>
    </phDependence>
</comment>
<comment type="subunit">
    <text evidence="1">Interacts with PDZK1.</text>
</comment>
<comment type="interaction">
    <interactant intactId="EBI-9846338">
        <id>O76082</id>
    </interactant>
    <interactant intactId="EBI-1055448">
        <id>Q01581</id>
        <label>HMGCS1</label>
    </interactant>
    <organismsDiffer>false</organismsDiffer>
    <experiments>2</experiments>
</comment>
<comment type="interaction">
    <interactant intactId="EBI-9846338">
        <id>O76082</id>
    </interactant>
    <interactant intactId="EBI-3044087">
        <id>Q7Z3Y8</id>
        <label>KRT27</label>
    </interactant>
    <organismsDiffer>false</organismsDiffer>
    <experiments>3</experiments>
</comment>
<comment type="interaction">
    <interactant intactId="EBI-9846338">
        <id>O76082</id>
    </interactant>
    <interactant intactId="EBI-1047093">
        <id>O76011</id>
        <label>KRT34</label>
    </interactant>
    <organismsDiffer>false</organismsDiffer>
    <experiments>3</experiments>
</comment>
<comment type="interaction">
    <interactant intactId="EBI-9846338">
        <id>O76082</id>
    </interactant>
    <interactant intactId="EBI-22311199">
        <id>Q3LI67</id>
        <label>KRTAP6-3</label>
    </interactant>
    <organismsDiffer>false</organismsDiffer>
    <experiments>3</experiments>
</comment>
<comment type="interaction">
    <interactant intactId="EBI-9846338">
        <id>O76082</id>
    </interactant>
    <interactant intactId="EBI-11522433">
        <id>Q5JR59-3</id>
        <label>MTUS2</label>
    </interactant>
    <organismsDiffer>false</organismsDiffer>
    <experiments>3</experiments>
</comment>
<comment type="interaction">
    <interactant intactId="EBI-9846338">
        <id>O76082</id>
    </interactant>
    <interactant intactId="EBI-22310682">
        <id>P0DPK4</id>
        <label>NOTCH2NLC</label>
    </interactant>
    <organismsDiffer>false</organismsDiffer>
    <experiments>3</experiments>
</comment>
<comment type="subcellular location">
    <subcellularLocation>
        <location evidence="12 20 31">Cell membrane</location>
        <topology evidence="12">Multi-pass membrane protein</topology>
    </subcellularLocation>
    <subcellularLocation>
        <location evidence="13 27">Apical cell membrane</location>
        <topology evidence="2">Multi-pass membrane protein</topology>
    </subcellularLocation>
    <subcellularLocation>
        <location evidence="32">Basal cell membrane</location>
        <topology evidence="2">Multi-pass membrane protein</topology>
    </subcellularLocation>
    <text evidence="27 32">In intestinal cells, apical expression is induced by TNF. Localized to the basal membrane of Sertoli cells (PubMed:35307651).</text>
</comment>
<comment type="subcellular location">
    <molecule>Isoform 3</molecule>
    <subcellularLocation>
        <location evidence="20">Endoplasmic reticulum</location>
    </subcellularLocation>
</comment>
<comment type="alternative products">
    <event type="alternative splicing"/>
    <isoform>
        <id>O76082-1</id>
        <name>1</name>
        <sequence type="displayed"/>
    </isoform>
    <isoform>
        <id>O76082-2</id>
        <name>2</name>
        <sequence type="described" ref="VSP_011120 VSP_011121"/>
    </isoform>
    <isoform>
        <id>O76082-3</id>
        <name>3</name>
        <name evidence="36">OCTN2VT</name>
        <sequence type="described" ref="VSP_043904"/>
    </isoform>
</comment>
<comment type="tissue specificity">
    <text evidence="6 22 32">Strongly expressed in kidney, skeletal muscle, heart and placenta (PubMed:10454528). Primarily expressed by surface epithelial cells of the colon (at protein level) (PubMed:18005709). Expressed in CD68 macrophage and CD43 T-cells but not in CD20 B-cells (PubMed:10454528). In testis, localized to Sertoli cell basal membranes, peritubular myoid cells and Leydig cells (PubMed:35307651).</text>
</comment>
<comment type="induction">
    <text evidence="27">Intestinal expression is induced by IFNG.</text>
</comment>
<comment type="PTM">
    <text evidence="20">Glycosylated. Glycosylation affects the expression levels.</text>
</comment>
<comment type="PTM">
    <molecule>Isoform 3</molecule>
    <text evidence="20">Not glycosylated.</text>
</comment>
<comment type="disease" evidence="4 5 6 7 9 10 11 12 14 15 16 17 18 19 24 25 26 28 29">
    <disease id="DI-02356">
        <name>Systemic primary carnitine deficiency</name>
        <acronym>CDSP</acronym>
        <description>Autosomal recessive disorder of fatty acid oxidation caused by defective carnitine transport. Present early in life with hypoketotic hypoglycemia and acute metabolic decompensation, or later in life with skeletal myopathy or cardiomyopathy.</description>
        <dbReference type="MIM" id="212140"/>
    </disease>
    <text>The disease is caused by variants affecting the gene represented in this entry.</text>
</comment>
<comment type="disease">
    <text evidence="27">Expression in colon is increased in Crohn's disease and human ulcerative colitis (at protein level).</text>
</comment>
<comment type="similarity">
    <text evidence="37">Belongs to the major facilitator (TC 2.A.1) superfamily. Organic cation transporter (TC 2.A.1.19) family.</text>
</comment>
<comment type="online information" name="The SLC22A5 database">
    <link uri="http://www.arup.utah.edu/database/OCTN2/OCTN2_welcome.php"/>
</comment>
<accession>O76082</accession>
<accession>A2Q0V1</accession>
<accession>B2R844</accession>
<accession>D3DQ87</accession>
<accession>Q6ZQZ8</accession>
<accession>Q96EH6</accession>
<organism>
    <name type="scientific">Homo sapiens</name>
    <name type="common">Human</name>
    <dbReference type="NCBI Taxonomy" id="9606"/>
    <lineage>
        <taxon>Eukaryota</taxon>
        <taxon>Metazoa</taxon>
        <taxon>Chordata</taxon>
        <taxon>Craniata</taxon>
        <taxon>Vertebrata</taxon>
        <taxon>Euteleostomi</taxon>
        <taxon>Mammalia</taxon>
        <taxon>Eutheria</taxon>
        <taxon>Euarchontoglires</taxon>
        <taxon>Primates</taxon>
        <taxon>Haplorrhini</taxon>
        <taxon>Catarrhini</taxon>
        <taxon>Hominidae</taxon>
        <taxon>Homo</taxon>
    </lineage>
</organism>
<proteinExistence type="evidence at protein level"/>
<reference key="1">
    <citation type="journal article" date="1998" name="Biochem. Biophys. Res. Commun.">
        <title>cDNA sequence, transport function, and genomic organization of human OCTN2, a new member of the organic cation transporter family.</title>
        <authorList>
            <person name="Wu X."/>
            <person name="Prasad P.D."/>
            <person name="Leibach F.H."/>
            <person name="Ganapathy V."/>
        </authorList>
    </citation>
    <scope>NUCLEOTIDE SEQUENCE [MRNA] (ISOFORM 1)</scope>
</reference>
<reference key="2">
    <citation type="journal article" date="1998" name="J. Biol. Chem.">
        <title>Molecular and functional identification of sodium ion-dependent, high affinity human carnitine transporter OCTN2.</title>
        <authorList>
            <person name="Tamai I."/>
            <person name="Ohashi R."/>
            <person name="Nezu J."/>
            <person name="Yabuuchi H."/>
            <person name="Oku A."/>
            <person name="Shimane M."/>
            <person name="Sai Y."/>
            <person name="Tsuji A."/>
        </authorList>
    </citation>
    <scope>NUCLEOTIDE SEQUENCE [MRNA] (ISOFORM 1)</scope>
    <source>
        <tissue>Kidney</tissue>
    </source>
</reference>
<reference key="3">
    <citation type="journal article" date="1999" name="Nat. Genet.">
        <title>Primary systemic carnitine deficiency is caused by mutations in a gene encoding sodium ion-dependent carnitine transporter.</title>
        <authorList>
            <person name="Nezu J."/>
            <person name="Tamai I."/>
            <person name="Oku A."/>
            <person name="Ohashi R."/>
            <person name="Yabuuchi H."/>
            <person name="Hashimoto N."/>
            <person name="Nikaido H."/>
            <person name="Sai Y."/>
            <person name="Koizumi A."/>
            <person name="Shoji Y."/>
            <person name="Takada G."/>
            <person name="Matsuishi T."/>
            <person name="Yashino M."/>
            <person name="Kato H."/>
            <person name="Ohura T."/>
            <person name="Tsujimoto G."/>
            <person name="Hayakawa J."/>
            <person name="Shimane M."/>
            <person name="Tsuji A."/>
        </authorList>
    </citation>
    <scope>NUCLEOTIDE SEQUENCE [GENOMIC DNA] (ISOFORM 1)</scope>
</reference>
<reference key="4">
    <citation type="journal article" date="2007" name="Biochim. Biophys. Acta">
        <title>OCTN2VT, a splice variant of OCTN2, does not transport carnitine because of the retention in the endoplasmic reticulum caused by insertion of 24 amino acids in the first extracellular loop of OCTN2.</title>
        <authorList>
            <person name="Maekawa S."/>
            <person name="Mori D."/>
            <person name="Nishiya T."/>
            <person name="Takikawa O."/>
            <person name="Horinouchi T."/>
            <person name="Nishimoto A."/>
            <person name="Kajita E."/>
            <person name="Miwa S."/>
        </authorList>
    </citation>
    <scope>NUCLEOTIDE SEQUENCE [MRNA] (ISOFORM 3)</scope>
    <scope>FUNCTION (ISOFORM 3)</scope>
    <scope>SUBCELLULAR LOCATION (ISOFORM 3)</scope>
    <scope>SUBCELLULAR LOCATION</scope>
    <scope>TRANSORTER ACTIVITY</scope>
    <scope>GLYCOSYLATION AT GLUT-91</scope>
    <scope>MUTAGENESIS OF ASN-91</scope>
</reference>
<reference key="5">
    <citation type="journal article" date="2004" name="Nat. Genet.">
        <title>Complete sequencing and characterization of 21,243 full-length human cDNAs.</title>
        <authorList>
            <person name="Ota T."/>
            <person name="Suzuki Y."/>
            <person name="Nishikawa T."/>
            <person name="Otsuki T."/>
            <person name="Sugiyama T."/>
            <person name="Irie R."/>
            <person name="Wakamatsu A."/>
            <person name="Hayashi K."/>
            <person name="Sato H."/>
            <person name="Nagai K."/>
            <person name="Kimura K."/>
            <person name="Makita H."/>
            <person name="Sekine M."/>
            <person name="Obayashi M."/>
            <person name="Nishi T."/>
            <person name="Shibahara T."/>
            <person name="Tanaka T."/>
            <person name="Ishii S."/>
            <person name="Yamamoto J."/>
            <person name="Saito K."/>
            <person name="Kawai Y."/>
            <person name="Isono Y."/>
            <person name="Nakamura Y."/>
            <person name="Nagahari K."/>
            <person name="Murakami K."/>
            <person name="Yasuda T."/>
            <person name="Iwayanagi T."/>
            <person name="Wagatsuma M."/>
            <person name="Shiratori A."/>
            <person name="Sudo H."/>
            <person name="Hosoiri T."/>
            <person name="Kaku Y."/>
            <person name="Kodaira H."/>
            <person name="Kondo H."/>
            <person name="Sugawara M."/>
            <person name="Takahashi M."/>
            <person name="Kanda K."/>
            <person name="Yokoi T."/>
            <person name="Furuya T."/>
            <person name="Kikkawa E."/>
            <person name="Omura Y."/>
            <person name="Abe K."/>
            <person name="Kamihara K."/>
            <person name="Katsuta N."/>
            <person name="Sato K."/>
            <person name="Tanikawa M."/>
            <person name="Yamazaki M."/>
            <person name="Ninomiya K."/>
            <person name="Ishibashi T."/>
            <person name="Yamashita H."/>
            <person name="Murakawa K."/>
            <person name="Fujimori K."/>
            <person name="Tanai H."/>
            <person name="Kimata M."/>
            <person name="Watanabe M."/>
            <person name="Hiraoka S."/>
            <person name="Chiba Y."/>
            <person name="Ishida S."/>
            <person name="Ono Y."/>
            <person name="Takiguchi S."/>
            <person name="Watanabe S."/>
            <person name="Yosida M."/>
            <person name="Hotuta T."/>
            <person name="Kusano J."/>
            <person name="Kanehori K."/>
            <person name="Takahashi-Fujii A."/>
            <person name="Hara H."/>
            <person name="Tanase T.-O."/>
            <person name="Nomura Y."/>
            <person name="Togiya S."/>
            <person name="Komai F."/>
            <person name="Hara R."/>
            <person name="Takeuchi K."/>
            <person name="Arita M."/>
            <person name="Imose N."/>
            <person name="Musashino K."/>
            <person name="Yuuki H."/>
            <person name="Oshima A."/>
            <person name="Sasaki N."/>
            <person name="Aotsuka S."/>
            <person name="Yoshikawa Y."/>
            <person name="Matsunawa H."/>
            <person name="Ichihara T."/>
            <person name="Shiohata N."/>
            <person name="Sano S."/>
            <person name="Moriya S."/>
            <person name="Momiyama H."/>
            <person name="Satoh N."/>
            <person name="Takami S."/>
            <person name="Terashima Y."/>
            <person name="Suzuki O."/>
            <person name="Nakagawa S."/>
            <person name="Senoh A."/>
            <person name="Mizoguchi H."/>
            <person name="Goto Y."/>
            <person name="Shimizu F."/>
            <person name="Wakebe H."/>
            <person name="Hishigaki H."/>
            <person name="Watanabe T."/>
            <person name="Sugiyama A."/>
            <person name="Takemoto M."/>
            <person name="Kawakami B."/>
            <person name="Yamazaki M."/>
            <person name="Watanabe K."/>
            <person name="Kumagai A."/>
            <person name="Itakura S."/>
            <person name="Fukuzumi Y."/>
            <person name="Fujimori Y."/>
            <person name="Komiyama M."/>
            <person name="Tashiro H."/>
            <person name="Tanigami A."/>
            <person name="Fujiwara T."/>
            <person name="Ono T."/>
            <person name="Yamada K."/>
            <person name="Fujii Y."/>
            <person name="Ozaki K."/>
            <person name="Hirao M."/>
            <person name="Ohmori Y."/>
            <person name="Kawabata A."/>
            <person name="Hikiji T."/>
            <person name="Kobatake N."/>
            <person name="Inagaki H."/>
            <person name="Ikema Y."/>
            <person name="Okamoto S."/>
            <person name="Okitani R."/>
            <person name="Kawakami T."/>
            <person name="Noguchi S."/>
            <person name="Itoh T."/>
            <person name="Shigeta K."/>
            <person name="Senba T."/>
            <person name="Matsumura K."/>
            <person name="Nakajima Y."/>
            <person name="Mizuno T."/>
            <person name="Morinaga M."/>
            <person name="Sasaki M."/>
            <person name="Togashi T."/>
            <person name="Oyama M."/>
            <person name="Hata H."/>
            <person name="Watanabe M."/>
            <person name="Komatsu T."/>
            <person name="Mizushima-Sugano J."/>
            <person name="Satoh T."/>
            <person name="Shirai Y."/>
            <person name="Takahashi Y."/>
            <person name="Nakagawa K."/>
            <person name="Okumura K."/>
            <person name="Nagase T."/>
            <person name="Nomura N."/>
            <person name="Kikuchi H."/>
            <person name="Masuho Y."/>
            <person name="Yamashita R."/>
            <person name="Nakai K."/>
            <person name="Yada T."/>
            <person name="Nakamura Y."/>
            <person name="Ohara O."/>
            <person name="Isogai T."/>
            <person name="Sugano S."/>
        </authorList>
    </citation>
    <scope>NUCLEOTIDE SEQUENCE [LARGE SCALE MRNA] (ISOFORMS 1 AND 2)</scope>
    <source>
        <tissue>Trachea</tissue>
    </source>
</reference>
<reference key="6">
    <citation type="journal article" date="2004" name="Nature">
        <title>The DNA sequence and comparative analysis of human chromosome 5.</title>
        <authorList>
            <person name="Schmutz J."/>
            <person name="Martin J."/>
            <person name="Terry A."/>
            <person name="Couronne O."/>
            <person name="Grimwood J."/>
            <person name="Lowry S."/>
            <person name="Gordon L.A."/>
            <person name="Scott D."/>
            <person name="Xie G."/>
            <person name="Huang W."/>
            <person name="Hellsten U."/>
            <person name="Tran-Gyamfi M."/>
            <person name="She X."/>
            <person name="Prabhakar S."/>
            <person name="Aerts A."/>
            <person name="Altherr M."/>
            <person name="Bajorek E."/>
            <person name="Black S."/>
            <person name="Branscomb E."/>
            <person name="Caoile C."/>
            <person name="Challacombe J.F."/>
            <person name="Chan Y.M."/>
            <person name="Denys M."/>
            <person name="Detter J.C."/>
            <person name="Escobar J."/>
            <person name="Flowers D."/>
            <person name="Fotopulos D."/>
            <person name="Glavina T."/>
            <person name="Gomez M."/>
            <person name="Gonzales E."/>
            <person name="Goodstein D."/>
            <person name="Grigoriev I."/>
            <person name="Groza M."/>
            <person name="Hammon N."/>
            <person name="Hawkins T."/>
            <person name="Haydu L."/>
            <person name="Israni S."/>
            <person name="Jett J."/>
            <person name="Kadner K."/>
            <person name="Kimball H."/>
            <person name="Kobayashi A."/>
            <person name="Lopez F."/>
            <person name="Lou Y."/>
            <person name="Martinez D."/>
            <person name="Medina C."/>
            <person name="Morgan J."/>
            <person name="Nandkeshwar R."/>
            <person name="Noonan J.P."/>
            <person name="Pitluck S."/>
            <person name="Pollard M."/>
            <person name="Predki P."/>
            <person name="Priest J."/>
            <person name="Ramirez L."/>
            <person name="Retterer J."/>
            <person name="Rodriguez A."/>
            <person name="Rogers S."/>
            <person name="Salamov A."/>
            <person name="Salazar A."/>
            <person name="Thayer N."/>
            <person name="Tice H."/>
            <person name="Tsai M."/>
            <person name="Ustaszewska A."/>
            <person name="Vo N."/>
            <person name="Wheeler J."/>
            <person name="Wu K."/>
            <person name="Yang J."/>
            <person name="Dickson M."/>
            <person name="Cheng J.-F."/>
            <person name="Eichler E.E."/>
            <person name="Olsen A."/>
            <person name="Pennacchio L.A."/>
            <person name="Rokhsar D.S."/>
            <person name="Richardson P."/>
            <person name="Lucas S.M."/>
            <person name="Myers R.M."/>
            <person name="Rubin E.M."/>
        </authorList>
    </citation>
    <scope>NUCLEOTIDE SEQUENCE [LARGE SCALE GENOMIC DNA]</scope>
</reference>
<reference key="7">
    <citation type="submission" date="2005-09" db="EMBL/GenBank/DDBJ databases">
        <authorList>
            <person name="Mural R.J."/>
            <person name="Istrail S."/>
            <person name="Sutton G.G."/>
            <person name="Florea L."/>
            <person name="Halpern A.L."/>
            <person name="Mobarry C.M."/>
            <person name="Lippert R."/>
            <person name="Walenz B."/>
            <person name="Shatkay H."/>
            <person name="Dew I."/>
            <person name="Miller J.R."/>
            <person name="Flanigan M.J."/>
            <person name="Edwards N.J."/>
            <person name="Bolanos R."/>
            <person name="Fasulo D."/>
            <person name="Halldorsson B.V."/>
            <person name="Hannenhalli S."/>
            <person name="Turner R."/>
            <person name="Yooseph S."/>
            <person name="Lu F."/>
            <person name="Nusskern D.R."/>
            <person name="Shue B.C."/>
            <person name="Zheng X.H."/>
            <person name="Zhong F."/>
            <person name="Delcher A.L."/>
            <person name="Huson D.H."/>
            <person name="Kravitz S.A."/>
            <person name="Mouchard L."/>
            <person name="Reinert K."/>
            <person name="Remington K.A."/>
            <person name="Clark A.G."/>
            <person name="Waterman M.S."/>
            <person name="Eichler E.E."/>
            <person name="Adams M.D."/>
            <person name="Hunkapiller M.W."/>
            <person name="Myers E.W."/>
            <person name="Venter J.C."/>
        </authorList>
    </citation>
    <scope>NUCLEOTIDE SEQUENCE [LARGE SCALE GENOMIC DNA]</scope>
</reference>
<reference key="8">
    <citation type="journal article" date="2004" name="Genome Res.">
        <title>The status, quality, and expansion of the NIH full-length cDNA project: the Mammalian Gene Collection (MGC).</title>
        <authorList>
            <consortium name="The MGC Project Team"/>
        </authorList>
    </citation>
    <scope>NUCLEOTIDE SEQUENCE [LARGE SCALE MRNA] (ISOFORM 1)</scope>
    <source>
        <tissue>Lung</tissue>
    </source>
</reference>
<reference key="9">
    <citation type="journal article" date="1999" name="J. Pharmacol. Exp. Ther.">
        <title>Na(+)-dependent carnitine transport by organic cation transporter (OCTN2): its pharmacological and toxicological relevance.</title>
        <authorList>
            <person name="Ohashi R."/>
            <person name="Tamai I."/>
            <person name="Yabuuchi H."/>
            <person name="Nezu J.I."/>
            <person name="Oku A."/>
            <person name="Sai Y."/>
            <person name="Shimane M."/>
            <person name="Tsuji A."/>
        </authorList>
    </citation>
    <scope>FUNCTION</scope>
    <scope>BIOPHYSICOCHEMICAL PROPERTIES</scope>
    <scope>TRANSPORTER ACTIVITY</scope>
</reference>
<reference key="10">
    <citation type="journal article" date="2000" name="Am. J. Physiol.">
        <title>Functional and pharmacological characterization of human Na(+)-carnitine cotransporter hOCTN2.</title>
        <authorList>
            <person name="Wagner C.A."/>
            <person name="Luekewille U."/>
            <person name="Kaltenbach S."/>
            <person name="Moschen I."/>
            <person name="Broeer A."/>
            <person name="Risler T."/>
            <person name="Broeer S."/>
            <person name="Lang F."/>
        </authorList>
    </citation>
    <scope>FUNCTION</scope>
    <scope>BIOPHYSICOCHEMICAL PROPERTIES</scope>
    <scope>TRANSPORTER ACTIVITY</scope>
    <scope>ACTIVITY REGULATION</scope>
</reference>
<reference key="11">
    <citation type="journal article" date="2007" name="Am. J. Physiol.">
        <title>Transport of butyryl-L-carnitine, a potential prodrug, via the carnitine transporter OCTN2 and the amino acid transporter ATB(0,+).</title>
        <authorList>
            <person name="Srinivas S.R."/>
            <person name="Prasad P.D."/>
            <person name="Umapathy N.S."/>
            <person name="Ganapathy V."/>
            <person name="Shekhawat P.S."/>
        </authorList>
    </citation>
    <scope>FUNCTION</scope>
    <scope>TRANSPORTER ACTIVITY</scope>
</reference>
<reference key="12">
    <citation type="journal article" date="2007" name="Cell Host Microbe">
        <title>The Bacillus subtilis quorum-sensing molecule CSF contributes to intestinal homeostasis via OCTN2, a host cell membrane transporter.</title>
        <authorList>
            <person name="Fujiya M."/>
            <person name="Musch M.W."/>
            <person name="Nakagawa Y."/>
            <person name="Hu S."/>
            <person name="Alverdy J."/>
            <person name="Kohgo Y."/>
            <person name="Schneewind O."/>
            <person name="Jabri B."/>
            <person name="Chang E.B."/>
        </authorList>
    </citation>
    <scope>FUNCTION</scope>
    <scope>TRANSPORTER ACTIVITY</scope>
    <scope>TISSUE SPECIFICITY</scope>
    <scope>SUBCELLULAR LOCATION</scope>
</reference>
<reference key="13">
    <citation type="journal article" date="2009" name="Nat. Biotechnol.">
        <title>Mass-spectrometric identification and relative quantification of N-linked cell surface glycoproteins.</title>
        <authorList>
            <person name="Wollscheid B."/>
            <person name="Bausch-Fluck D."/>
            <person name="Henderson C."/>
            <person name="O'Brien R."/>
            <person name="Bibel M."/>
            <person name="Schiess R."/>
            <person name="Aebersold R."/>
            <person name="Watts J.D."/>
        </authorList>
    </citation>
    <scope>GLYCOSYLATION [LARGE SCALE ANALYSIS] AT ASN-57 AND ASN-91</scope>
    <source>
        <tissue>Leukemic T-cell</tissue>
    </source>
</reference>
<reference key="14">
    <citation type="journal article" date="2009" name="Sci. Signal.">
        <title>Quantitative phosphoproteomic analysis of T cell receptor signaling reveals system-wide modulation of protein-protein interactions.</title>
        <authorList>
            <person name="Mayya V."/>
            <person name="Lundgren D.H."/>
            <person name="Hwang S.-I."/>
            <person name="Rezaul K."/>
            <person name="Wu L."/>
            <person name="Eng J.K."/>
            <person name="Rodionov V."/>
            <person name="Han D.K."/>
        </authorList>
    </citation>
    <scope>PHOSPHORYLATION [LARGE SCALE ANALYSIS] AT TYR-486</scope>
    <scope>IDENTIFICATION BY MASS SPECTROMETRY [LARGE SCALE ANALYSIS]</scope>
    <source>
        <tissue>Leukemic T-cell</tissue>
    </source>
</reference>
<reference key="15">
    <citation type="journal article" date="2011" name="Inflamm. Bowel Dis.">
        <title>Cytokine regulation of OCTN2 expression and activity in small and large intestine.</title>
        <authorList>
            <person name="Fujiya M."/>
            <person name="Inaba Y."/>
            <person name="Musch M.W."/>
            <person name="Hu S."/>
            <person name="Kohgo Y."/>
            <person name="Chang E.B."/>
        </authorList>
    </citation>
    <scope>FUNCTION</scope>
    <scope>TISSUE SPECIFICITY</scope>
    <scope>SUBCELLULAR LOCATION</scope>
    <scope>INDUCTION BY CYTOKINES</scope>
    <scope>TRANSPORTER ACTIVITY</scope>
    <scope>INVOLVEMENT IN DISEASE</scope>
</reference>
<reference key="16">
    <citation type="journal article" date="2013" name="J. Proteome Res.">
        <title>Toward a comprehensive characterization of a human cancer cell phosphoproteome.</title>
        <authorList>
            <person name="Zhou H."/>
            <person name="Di Palma S."/>
            <person name="Preisinger C."/>
            <person name="Peng M."/>
            <person name="Polat A.N."/>
            <person name="Heck A.J."/>
            <person name="Mohammed S."/>
        </authorList>
    </citation>
    <scope>PHOSPHORYLATION [LARGE SCALE ANALYSIS] AT THR-550</scope>
    <scope>IDENTIFICATION BY MASS SPECTROMETRY [LARGE SCALE ANALYSIS]</scope>
    <source>
        <tissue>Cervix carcinoma</tissue>
    </source>
</reference>
<reference key="17">
    <citation type="journal article" date="2020" name="FASEB J.">
        <title>Deorphaning a solute carrier 22 family member, SLC22A15, through functional genomic studies.</title>
        <authorList>
            <person name="Yee S.W."/>
            <person name="Buitrago D."/>
            <person name="Stecula A."/>
            <person name="Ngo H.X."/>
            <person name="Chien H.C."/>
            <person name="Zou L."/>
            <person name="Koleske M.L."/>
            <person name="Giacomini K.M."/>
        </authorList>
    </citation>
    <scope>FUNCTION</scope>
    <scope>TRANSPORTER ACTIVITY</scope>
</reference>
<reference key="18">
    <citation type="journal article" date="2021" name="J. Biol. Chem.">
        <title>Cholesterol stimulates the cellular uptake of L-carnitine by the carnitine/organic cation transporter novel 2 (OCTN2).</title>
        <authorList>
            <person name="Zhang L."/>
            <person name="Gui T."/>
            <person name="Console L."/>
            <person name="Scalise M."/>
            <person name="Indiveri C."/>
            <person name="Hausler S."/>
            <person name="Kullak-Ublick G.A."/>
            <person name="Gai Z."/>
            <person name="Visentin M."/>
        </authorList>
    </citation>
    <scope>ACTIVITY REGULATION</scope>
    <scope>SUBCELLULAR LOCATION</scope>
    <scope>TISSUE SPECIFICITY</scope>
    <scope>FUNCTION</scope>
    <scope>TRANSPORTER ACTIVITY</scope>
    <scope>BIOPHYSICOCHEMICAL PROPERTIES</scope>
</reference>
<reference key="19">
    <citation type="journal article" date="2022" name="Drug Metab. Dispos.">
        <title>Localization of Xenobiotic Transporters Expressed at the Human Blood-Testis Barrier.</title>
        <authorList>
            <person name="Hau R.K."/>
            <person name="Klein R.R."/>
            <person name="Wright S.H."/>
            <person name="Cherrington N.J."/>
        </authorList>
    </citation>
    <scope>FUNCTION</scope>
    <scope>SUBCELLULAR LOCATION</scope>
    <scope>TISSUE SPECIFICITY</scope>
</reference>
<reference key="20">
    <citation type="journal article" date="1999" name="Biochem. Biophys. Res. Commun.">
        <title>Carnitine transporter OCTN2 mutations in systemic primary carnitine deficiency: a novel Arg169Gln mutation and a recurrent Arg282ter mutation associated with an unconventional splicing abnormality.</title>
        <authorList>
            <person name="Burwinkel B."/>
            <person name="Kreuder J."/>
            <person name="Schweitzer S."/>
            <person name="Vorgerd M."/>
            <person name="Gempel K."/>
            <person name="Gerbitz K.-D."/>
            <person name="Kilimann M.W."/>
        </authorList>
    </citation>
    <scope>VARIANT CDSP GLN-169</scope>
</reference>
<reference key="21">
    <citation type="journal article" date="1999" name="Hum. Genet.">
        <title>Identification of two novel mutations in OCTN2 of three patients with systemic carnitine deficiency.</title>
        <authorList>
            <person name="Vaz F.M."/>
            <person name="Scholte H.R."/>
            <person name="Ruiter J."/>
            <person name="Hussaarts-Odijk L.M."/>
            <person name="Rodrigues Pereira R."/>
            <person name="Schweitzer S."/>
            <person name="de Klerk J.B.C."/>
            <person name="Waterham H.R."/>
            <person name="Wanders R.J.A."/>
        </authorList>
    </citation>
    <scope>VARIANT CDSP CYS-211</scope>
</reference>
<reference key="22">
    <citation type="journal article" date="1999" name="Hum. Mol. Genet.">
        <title>Mutations of OCTN2, an organic cation/carnitine transporter, lead to deficient cellular carnitine uptake in primary carnitine deficiency.</title>
        <authorList>
            <person name="Tang N.L."/>
            <person name="Ganapathy V."/>
            <person name="Wu X."/>
            <person name="Hui J."/>
            <person name="Seth P."/>
            <person name="Yuen P.M."/>
            <person name="Wanders R.J."/>
            <person name="Fok T.F."/>
            <person name="Hjelm N.M."/>
        </authorList>
    </citation>
    <scope>VARIANT CDSP LEU-478</scope>
</reference>
<reference key="23">
    <citation type="journal article" date="1999" name="Hum. Mol. Genet.">
        <title>Genetic epidemiology of the carnitine transporter OCTN2 gene in a Japanese population and phenotypic characterization in Japanese pedigrees with primary systemic carnitine deficiency.</title>
        <authorList>
            <person name="Koizumi A."/>
            <person name="Nozaki J."/>
            <person name="Ohura T."/>
            <person name="Kayo T."/>
            <person name="Wada Y."/>
            <person name="Nezu J."/>
            <person name="Ohashi R."/>
            <person name="Tamai I."/>
            <person name="Shoji Y."/>
            <person name="Takada G."/>
            <person name="Kibira S."/>
            <person name="Matsuishi T."/>
            <person name="Tsuji A."/>
        </authorList>
    </citation>
    <scope>VARIANTS CDSP LEU-179; CYS-283 AND CYS-467</scope>
    <scope>CHARACTERIZATION OF VARIANTS CDSP LEU-179; CYS-283 AND CYS-467</scope>
</reference>
<reference key="24">
    <citation type="journal article" date="1999" name="J. Biol. Chem.">
        <title>Mutations in novel organic cation transporter (OCTN2), an organic cation/carnitine transporter, with differential effects on the organic cation transport function and the carnitine transport function.</title>
        <authorList>
            <person name="Seth P."/>
            <person name="Wu X."/>
            <person name="Huang W."/>
            <person name="Leibach F.H."/>
            <person name="Ganapathy V."/>
        </authorList>
    </citation>
    <scope>CHARACTERIZATION OF VARIANT CDSP LEU-478</scope>
    <scope>MUTAGENESIS OF MET-352</scope>
</reference>
<reference key="25">
    <citation type="journal article" date="1999" name="J. Pharmacol. Exp. Ther.">
        <title>Functional characteristics and tissue distribution pattern of organic cation transporter 2 (OCTN2), an organic cation/carnitine transporter.</title>
        <authorList>
            <person name="Wu X."/>
            <person name="Huang W."/>
            <person name="Prasad P.D."/>
            <person name="Seth P."/>
            <person name="Rajan D.P."/>
            <person name="Leibach F.H."/>
            <person name="Chen J."/>
            <person name="Conway S.J."/>
            <person name="Ganapathy V."/>
        </authorList>
    </citation>
    <scope>FUNCTION</scope>
    <scope>TISSUE SPECIFICITY</scope>
    <scope>CHARACTERIZATION OF VARIANT CDSP LEU-478</scope>
    <scope>MUTAGENESIS OF MET-352</scope>
    <scope>TRANSPORTER ACTIVITY</scope>
</reference>
<reference key="26">
    <citation type="journal article" date="2000" name="Hum. Mutat.">
        <title>Two novel missense mutations of the OCTN2 gene (W283R and V446F) in a patient with primary systemic carnitine deficiency.</title>
        <authorList>
            <person name="Mayatepek E."/>
            <person name="Nezu J."/>
            <person name="Tamai I."/>
            <person name="Oku A."/>
            <person name="Katsura M."/>
            <person name="Shimane M."/>
            <person name="Tsuji A."/>
        </authorList>
    </citation>
    <scope>VARIANTS CDSP ARG-283 AND PHE-446</scope>
</reference>
<reference key="27">
    <citation type="journal article" date="2000" name="Hum. Mutat.">
        <title>A missense mutation in the OCTN2 gene associated with residual carnitine transport activity.</title>
        <authorList>
            <person name="Wang Y."/>
            <person name="Kelly M.A."/>
            <person name="Cowan T.M."/>
            <person name="Longo N."/>
        </authorList>
    </citation>
    <scope>SUBCELLULAR LOCATION</scope>
    <scope>VARIANT CDSP LYS-452</scope>
</reference>
<reference key="28">
    <citation type="journal article" date="2000" name="Hum. Mutat.">
        <title>Functional analysis of mutations in the OCTN2 transporter causing primary carnitine deficiency: lack of genotype-phenotype correlation.</title>
        <authorList>
            <person name="Wang Y."/>
            <person name="Taroni F."/>
            <person name="Garavaglia B."/>
            <person name="Longo N."/>
        </authorList>
    </citation>
    <scope>VARIANTS CDSP TRP-169; VAL-242; ASP-301 AND ARG-351</scope>
    <scope>CHARACTERIZATION OF VARIANTS CDSP TRP-169; VAL-242; ASP-301 AND ARG-351</scope>
</reference>
<reference key="29">
    <citation type="journal article" date="2001" name="Genet. Med.">
        <title>Phenotype and genotype variation in primary carnitine deficiency.</title>
        <authorList>
            <person name="Wang Y."/>
            <person name="Korman S.H."/>
            <person name="Ye J."/>
            <person name="Gargus J.J."/>
            <person name="Gutman A."/>
            <person name="Taroni F."/>
            <person name="Garavaglia B."/>
            <person name="Longo N."/>
        </authorList>
    </citation>
    <scope>VARIANTS CDSP PRO-19 AND GLN-399</scope>
    <scope>CHARACTERIZATION OF VARIANTS CDSP PRO-19 AND GLN-399</scope>
</reference>
<reference key="30">
    <citation type="journal article" date="2004" name="J. Inherit. Metab. Dis.">
        <title>Carnitine transporter defect due to a novel mutation in the SLC22A5 gene presenting with peripheral neuropathy.</title>
        <authorList>
            <person name="Makhseed N."/>
            <person name="Vallance H.D."/>
            <person name="Potter M."/>
            <person name="Waters P.J."/>
            <person name="Wong L.T.K."/>
            <person name="Lillquist Y."/>
            <person name="Pasquali M."/>
            <person name="Amat di San Filippo C."/>
            <person name="Longo N."/>
        </authorList>
    </citation>
    <scope>VARIANT CDSP LEU-83</scope>
</reference>
<reference key="31">
    <citation type="journal article" date="2005" name="Hum. Mutat.">
        <title>Validation of dye-binding/high-resolution thermal denaturation for the identification of mutations in the SLC22A5 gene.</title>
        <authorList>
            <person name="Dobrowolski S.F."/>
            <person name="McKinney J.T."/>
            <person name="Amat di San Filippo C."/>
            <person name="Giak Sim K."/>
            <person name="Wilcken B."/>
            <person name="Longo N."/>
        </authorList>
    </citation>
    <scope>VARIANTS CDSP PRO-19; LEU-83; TRP-169; MET-232; VAL-242; ASP-301; ARG-351; GLN-399; CYS-447; ASP-449; LYS-452 AND ARG-468</scope>
    <scope>CHARACTERIZATION OF VARIANTS MET-232 AND ARG-468</scope>
</reference>
<reference key="32">
    <citation type="journal article" date="2006" name="Mol. Pharmacol.">
        <title>Functional genetic diversity in the high-affinity carnitine transporter OCTN2 (SLC22A5).</title>
        <authorList>
            <person name="Urban T.J."/>
            <person name="Gallagher R.C."/>
            <person name="Brown C."/>
            <person name="Castro R.A."/>
            <person name="Lagpacan L.L."/>
            <person name="Brett C.M."/>
            <person name="Taylor T.R."/>
            <person name="Carlson E.J."/>
            <person name="Ferrin T.E."/>
            <person name="Burchard E.G."/>
            <person name="Packman S."/>
            <person name="Giacomini K.M."/>
        </authorList>
    </citation>
    <scope>VARIANTS PHE-144; ILE-481; PHE-481; LEU-508; VAL-530 AND SER-549</scope>
    <scope>VARIANTS CDSP LEU-17 AND ASP-449</scope>
</reference>
<reference key="33">
    <citation type="journal article" date="2007" name="Mol. Genet. Metab.">
        <title>Expanded newborn screening identifies maternal primary carnitine deficiency.</title>
        <authorList>
            <person name="Schimmenti L.A."/>
            <person name="Crombez E.A."/>
            <person name="Schwahn B.C."/>
            <person name="Heese B.A."/>
            <person name="Wood T.C."/>
            <person name="Schroer R.J."/>
            <person name="Bentler K."/>
            <person name="Cederbaum S."/>
            <person name="Sarafoglou K."/>
            <person name="McCann M."/>
            <person name="Rinaldo P."/>
            <person name="Matern D."/>
            <person name="di San Filippo C.A."/>
            <person name="Pasquali M."/>
            <person name="Berry S.A."/>
            <person name="Longo N."/>
        </authorList>
    </citation>
    <scope>VARIANTS CDSP SER-32; SER-46; CYS-467 AND CYS-488</scope>
    <scope>CHARACTERIZATION OF VARIANT CDSP SER-46</scope>
</reference>
<reference key="34">
    <citation type="journal article" date="2010" name="Genet. Med.">
        <title>Maternal systemic primary carnitine deficiency uncovered by newborn screening: clinical, biochemical, and molecular aspects.</title>
        <authorList>
            <person name="El-Hattab A.W."/>
            <person name="Li F.-Y."/>
            <person name="Shen J."/>
            <person name="Powell B.R."/>
            <person name="Bawle E.V."/>
            <person name="Adams D.J."/>
            <person name="Wahl E."/>
            <person name="Kobori J.A."/>
            <person name="Graham B."/>
            <person name="Scaglia F."/>
            <person name="Wong L.-J."/>
        </authorList>
    </citation>
    <scope>VARIANTS CDSP TRP-15; SER-46; LEU-83; SER-142; VAL-214; MET-232; TRP-399 AND ILE-442</scope>
</reference>
<reference key="35">
    <citation type="journal article" date="2010" name="Hum. Mutat.">
        <title>Molecular spectrum of SLC22A5 (OCTN2) gene mutations detected in 143 subjects evaluated for systemic carnitine deficiency.</title>
        <authorList>
            <person name="Li F.-Y."/>
            <person name="El-Hattab A.W."/>
            <person name="Bawle E.V."/>
            <person name="Boles R.G."/>
            <person name="Schmitt E.S."/>
            <person name="Scaglia F."/>
            <person name="Wong L.-J."/>
        </authorList>
    </citation>
    <scope>VARIANTS CDSP SER-12; TRP-15; LEU-17; SER-32; SER-46; LEU-83; TYR-122; SER-142; TRP-169; GLN-169; PRO-186; VAL-214; HIS-227; MET-232; TRP-257; ARG-264; GLN-282; LEU-355; LEU-398; TRP-399; MET-440; ILE-442; VAL-443; ASP-449; LYS-452; ARG-455; CYS-467; CYS-488 AND SER-507</scope>
    <scope>VARIANTS PRO-66; PRO-75; ALA-96; GLY-123; LEU-143; VAL-177; LEU-230; THR-240; VAL-312; ASN-358 AND SER-549</scope>
</reference>
<reference key="36">
    <citation type="journal article" date="2010" name="Mol. Genet. Metab.">
        <title>Diagnoses of newborns and mothers with carnitine uptake defects through newborn screening.</title>
        <authorList>
            <person name="Lee N.-C."/>
            <person name="Tang N.-L."/>
            <person name="Chien Y.-H."/>
            <person name="Chen C.-A."/>
            <person name="Lin S.-J."/>
            <person name="Chiu P.-C."/>
            <person name="Huang A.-C."/>
            <person name="Hwu W.-L."/>
        </authorList>
    </citation>
    <scope>VARIANTS CDSP LEU-17; ARG-234; GLN-282; LEU-362; CYS-467 AND CYS-471</scope>
    <scope>VARIANT LEU-143</scope>
</reference>
<reference key="37">
    <citation type="journal article" date="2012" name="Hum. Mutat.">
        <title>Genotype-phenotype correlation in primary carnitine deficiency.</title>
        <authorList>
            <person name="Rose E.C."/>
            <person name="di San Filippo C.A."/>
            <person name="Ndukwe Erlingsson U.C."/>
            <person name="Ardon O."/>
            <person name="Pasquali M."/>
            <person name="Longo N."/>
        </authorList>
    </citation>
    <scope>VARIANTS CDSP TRP-15; PRO-19; PHE-22 DEL; ASN-26; SER-32; SER-46; LEU-83; SER-142; GLN-169; TRP-169; VAL-214; MET-232; PHE-280; GLN-282; ARG-283; ARG-351; MET-440; ILE-442; PHE-446; CYS-447; CYS-467; PRO-471 AND HIS-488</scope>
    <scope>CHARACTERIZATION OF VARIANTS CDSP TRP-15; PRO-19; PHE-22 DEL; ASN-26; SER-32; SER-46; LEU-83; GLN-169; TRP-169; VAL-214; MET-232; PHE-280; GLN-282; ARG-283; ARG-351; MET-440; ILE-442; PHE-446; CYS-447; CYS-467 AND PRO-471</scope>
</reference>
<reference key="38">
    <citation type="journal article" date="2017" name="Hum. Mutat.">
        <title>Functional and molecular studies in primary carnitine deficiency.</title>
        <authorList>
            <person name="Frigeni M."/>
            <person name="Balakrishnan B."/>
            <person name="Yin X."/>
            <person name="Calderon F.R.O."/>
            <person name="Mao R."/>
            <person name="Pasquali M."/>
            <person name="Longo N."/>
        </authorList>
    </citation>
    <scope>VARIANTS CDSP 4-TYR--PHE-557 DEL; SER-12; TRP-15; LEU-16; LEU-17; PRO-19; HIS-20; PHE-22 DEL; ASN-26; ILE-28; SER-32; VAL-44; LEU-46; SER-46; TYR-50; PRO-66; PRO-75; LEU-83; TRP-93; VAL-95; ALA-96; GLY-115; 117-TRP--PHE-557 DEL; GLY-123; ASP-131; 132-TRP--PHE-557 DEL; 140-TRP--PHE-557 DEL; SER-142; LEU-143; MET-151; GLN-169; PRO-169; TRP-169; MET-175; VAL-177; LEU-179; PRO-186; ARG-205; SER-210; CYS-211; VAL-214; LYS-219; LEU-225; HIS-227; LEU-230; PHE-231; MET-232; THR-240; VAL-242; ARG-247; 254-ARG--PHE-557 DEL; GLN-254; 256-TRP--PHE-557 DEL; TRP-257; ARG-264; MET-264; PRO-269; 275-TRP--PHE-557 DEL; PHE-280; 282-ARG--PHE-557 DEL; GLN-282; ARG-283; CYS-283; 289-ARG--PHE-557 DEL; 295-VAL--PHE-557 DEL; ASP-301; VAL-312; LYS-317; 319-GLN--PHE-557 DEL; THR-348; ARG-351; LEU-355; ASN-358; PRO-363; 387-TYR--PHE-557 DEL; LEU-394 DEL; LEU-398; GLN-399; TRP-399; GLY-412; GLY-439; MET-440; ILE-442; VAL-443; PHE-446; CYS-447; LEU-448; ASP-449; LYS-452; ARG-455; VAL-462; CYS-467; ARG-468; PHE-470; HIS-471; PRO-471; ARG-476; LEU-478; CYS-488; HIS-488 AND SER-507</scope>
    <scope>VARIANTS PHE-481 AND SER-549</scope>
    <scope>CHARACTERIZATION OF VARIANTS CDSP SER-12; TRP-15; LEU-16; LEU-17; PRO-19; HIS-20; PHE-23 DEL; ASN-26; ILE-28; SER-32; VAL-44; LEU-46; SER-46; TYR-50; PRO-66; PRO-75; LEU-83; TRP-93; VAL-95; ALA-96; GLY-115; GLY-123; ASP-131; SER-142; LEU-143; MET-151; GLN-169; PRO-169; TRP-169; MET-175; VAL-177; LEU-179; PRO-186; ARG-205; SER-210; CYS-211; VAL-214; LYS-219; LEU-225; HIS-227; LEU-230; PHE-231; MET-232; THR-240; VAL-242; ARG-247; GLN-254; TRP-257; ARG-264; MET-264; PRO-269; PHE-280; GLN-282; ARG-283; CYS-283; ASP-301; VAL-312; LYS-317; THR-348; ARG-351; LEU-355; ASN-358; PRO-363; LEU-394 DEL; LEU-398; GLN-399; TRP-399; GLY-412; GLY-439; MET-440; ILE-442; VAL-443; PHE-446; CYS-447; LEU-448; ASP-449; LYS-452; ARG-455; VAL-462; CYS-467; ARG-468; PHE-470; HIS-471; PRO-471; ARG-476; LEU-478; CYS-488; HIS-488 AND SER-507</scope>
    <scope>CHARACTERIZATION OF VARIANTS PHE-481 AND SER-549</scope>
</reference>
<sequence length="557" mass="62752">MRDYDEVTAFLGEWGPFQRLIFFLLSASIIPNGFTGLSSVFLIATPEHRCRVPDAANLSSAWRNHTVPLRLRDGREVPHSCRRYRLATIANFSALGLEPGRDVDLGQLEQESCLDGWEFSQDVYLSTIVTEWNLVCEDDWKAPLTISLFFVGVLLGSFISGQLSDRFGRKNVLFVTMGMQTGFSFLQIFSKNFEMFVVLFVLVGMGQISNYVAAFVLGTEILGKSVRIIFSTLGVCIFYAFGYMVLPLFAYFIRDWRMLLVALTMPGVLCVALWWFIPESPRWLISQGRFEEAEVIIRKAAKANGIVVPSTIFDPSELQDLSSKKQQSHNILDLLRTWNIRMVTIMSIMLWMTISVGYFGLSLDTPNLHGDIFVNCFLSAMVEVPAYVLAWLLLQYLPRRYSMATALFLGGSVLLFMQLVPPDLYYLATVLVMVGKFGVTAAFSMVYVYTAELYPTVVRNMGVGVSSTASRLGSILSPYFVYLGAYDRFLPYILMGSLTILTAILTLFLPESFGTPLPDTIDQMLRVKGMKHRKTPSHTRMLKDGQERPTILKSTAF</sequence>
<feature type="chain" id="PRO_0000220500" description="Organic cation/carnitine transporter 2">
    <location>
        <begin position="1"/>
        <end position="557"/>
    </location>
</feature>
<feature type="topological domain" description="Cytoplasmic" evidence="2">
    <location>
        <begin position="1"/>
        <end position="20"/>
    </location>
</feature>
<feature type="transmembrane region" description="Helical; Name=1" evidence="2">
    <location>
        <begin position="21"/>
        <end position="41"/>
    </location>
</feature>
<feature type="topological domain" description="Extracellular" evidence="2">
    <location>
        <begin position="42"/>
        <end position="142"/>
    </location>
</feature>
<feature type="transmembrane region" description="Helical; Name=2" evidence="2">
    <location>
        <begin position="143"/>
        <end position="163"/>
    </location>
</feature>
<feature type="topological domain" description="Cytoplasmic" evidence="2">
    <location>
        <begin position="164"/>
        <end position="172"/>
    </location>
</feature>
<feature type="transmembrane region" description="Helical; Name=3" evidence="2">
    <location>
        <begin position="173"/>
        <end position="193"/>
    </location>
</feature>
<feature type="topological domain" description="Extracellular" evidence="2">
    <location>
        <begin position="194"/>
        <end position="197"/>
    </location>
</feature>
<feature type="transmembrane region" description="Helical; Name=4" evidence="2">
    <location>
        <begin position="198"/>
        <end position="218"/>
    </location>
</feature>
<feature type="topological domain" description="Cytoplasmic" evidence="2">
    <location>
        <begin position="219"/>
        <end position="232"/>
    </location>
</feature>
<feature type="transmembrane region" description="Helical; Name=5" evidence="2">
    <location>
        <begin position="233"/>
        <end position="253"/>
    </location>
</feature>
<feature type="topological domain" description="Extracellular" evidence="2">
    <location>
        <begin position="254"/>
        <end position="257"/>
    </location>
</feature>
<feature type="transmembrane region" description="Helical; Name=6" evidence="2">
    <location>
        <begin position="258"/>
        <end position="278"/>
    </location>
</feature>
<feature type="topological domain" description="Cytoplasmic" evidence="2">
    <location>
        <begin position="279"/>
        <end position="341"/>
    </location>
</feature>
<feature type="transmembrane region" description="Helical; Name=7" evidence="2">
    <location>
        <begin position="342"/>
        <end position="362"/>
    </location>
</feature>
<feature type="topological domain" description="Extracellular" evidence="2">
    <location>
        <begin position="363"/>
        <end position="373"/>
    </location>
</feature>
<feature type="transmembrane region" description="Helical; Name=8" evidence="2">
    <location>
        <begin position="374"/>
        <end position="394"/>
    </location>
</feature>
<feature type="topological domain" description="Cytoplasmic" evidence="2">
    <location>
        <begin position="395"/>
        <end position="406"/>
    </location>
</feature>
<feature type="transmembrane region" description="Helical; Name=9" evidence="2">
    <location>
        <begin position="407"/>
        <end position="427"/>
    </location>
</feature>
<feature type="topological domain" description="Extracellular" evidence="2">
    <location>
        <begin position="428"/>
        <end position="430"/>
    </location>
</feature>
<feature type="transmembrane region" description="Helical; Name=10" evidence="2">
    <location>
        <begin position="431"/>
        <end position="451"/>
    </location>
</feature>
<feature type="topological domain" description="Cytoplasmic" evidence="2">
    <location>
        <begin position="452"/>
        <end position="462"/>
    </location>
</feature>
<feature type="transmembrane region" description="Helical; Name=11" evidence="2">
    <location>
        <begin position="463"/>
        <end position="483"/>
    </location>
</feature>
<feature type="topological domain" description="Extracellular" evidence="2">
    <location>
        <begin position="484"/>
        <end position="488"/>
    </location>
</feature>
<feature type="transmembrane region" description="Helical; Name=12" evidence="2">
    <location>
        <begin position="489"/>
        <end position="509"/>
    </location>
</feature>
<feature type="region of interest" description="Disordered" evidence="3">
    <location>
        <begin position="535"/>
        <end position="557"/>
    </location>
</feature>
<feature type="binding site" evidence="2">
    <location>
        <begin position="218"/>
        <end position="225"/>
    </location>
    <ligand>
        <name>ATP</name>
        <dbReference type="ChEBI" id="CHEBI:30616"/>
    </ligand>
</feature>
<feature type="modified residue" description="Phosphotyrosine" evidence="41">
    <location>
        <position position="486"/>
    </location>
</feature>
<feature type="modified residue" description="Phosphothreonine" evidence="42">
    <location>
        <position position="550"/>
    </location>
</feature>
<feature type="glycosylation site" description="N-linked (GlcNAc...) asparagine" evidence="23">
    <location>
        <position position="57"/>
    </location>
</feature>
<feature type="glycosylation site" description="N-linked (GlcNAc...) asparagine" evidence="2">
    <location>
        <position position="64"/>
    </location>
</feature>
<feature type="glycosylation site" description="N-linked (GlcNAc...) asparagine" evidence="20 23">
    <location>
        <position position="91"/>
    </location>
</feature>
<feature type="splice variant" id="VSP_011120" description="In isoform 2." evidence="35">
    <location>
        <begin position="1"/>
        <end position="336"/>
    </location>
</feature>
<feature type="splice variant" id="VSP_043904" description="In isoform 3." evidence="36">
    <original>E</original>
    <variation>EQDSGAYNAMKNRMGKKPALCLPAQ</variation>
    <location>
        <position position="131"/>
    </location>
</feature>
<feature type="splice variant" id="VSP_011121" description="In isoform 2." evidence="35">
    <original>TWNIRMVTIMSIMLW</original>
    <variation>MWILLFQLSSALCFR</variation>
    <location>
        <begin position="337"/>
        <end position="351"/>
    </location>
</feature>
<feature type="sequence variant" id="VAR_079640" description="In CDSP." evidence="29">
    <location>
        <begin position="4"/>
        <end position="557"/>
    </location>
</feature>
<feature type="sequence variant" id="VAR_064109" description="In CDSP; uncertain significance; reduces carnitine transport but the mutant retains 50% of wild-type activity; dbSNP:rs139203363." evidence="26 29">
    <original>G</original>
    <variation>S</variation>
    <location>
        <position position="12"/>
    </location>
</feature>
<feature type="sequence variant" id="VAR_064110" description="In CDSP; carnitine transport reduced to less than 20% of wild-type; dbSNP:rs267607052." evidence="24 26 28 29">
    <original>G</original>
    <variation>W</variation>
    <location>
        <position position="15"/>
    </location>
</feature>
<feature type="sequence variant" id="VAR_079641" description="In CDSP; loss of carnitine transport." evidence="29">
    <original>P</original>
    <variation>L</variation>
    <location>
        <position position="16"/>
    </location>
</feature>
<feature type="sequence variant" id="VAR_020347" description="In CDSP; carnitine transport reduced to less than 20% of wild-type; dbSNP:rs11568520." evidence="18 25 26 29">
    <original>F</original>
    <variation>L</variation>
    <location>
        <position position="17"/>
    </location>
</feature>
<feature type="sequence variant" id="VAR_064111" description="In CDSP; carnitine transport is reduced to less than 5% of normal; dbSNP:rs72552723." evidence="15 17 28 29">
    <original>R</original>
    <variation>P</variation>
    <location>
        <position position="19"/>
    </location>
</feature>
<feature type="sequence variant" id="VAR_079642" description="In CDSP; uncertain significance; reduces carnitine transport but the mutant retains 50% of wild-type activity; dbSNP:rs144020613." evidence="29">
    <original>L</original>
    <variation>H</variation>
    <location>
        <position position="20"/>
    </location>
</feature>
<feature type="sequence variant" id="VAR_066842" description="In CDSP; reduces carnitine transport to less than 1% of normal." evidence="28 29">
    <location>
        <position position="22"/>
    </location>
</feature>
<feature type="sequence variant" id="VAR_066843" description="In CDSP; carnitine transport reduced to less than 6% of wild-type; dbSNP:rs772578415." evidence="28 29">
    <original>S</original>
    <variation>N</variation>
    <location>
        <position position="26"/>
    </location>
</feature>
<feature type="sequence variant" id="VAR_079643" description="In CDSP; carnitine transport reduced to 1% of wild-type; dbSNP:rs72552724." evidence="29">
    <original>S</original>
    <variation>I</variation>
    <location>
        <position position="28"/>
    </location>
</feature>
<feature type="sequence variant" id="VAR_064112" description="In CDSP; carnitine transport reduced to less than 1% of wild-type; dbSNP:rs72552725." evidence="19 26 28 29">
    <original>N</original>
    <variation>S</variation>
    <location>
        <position position="32"/>
    </location>
</feature>
<feature type="sequence variant" id="VAR_079644" description="In CDSP; carnitine transport reduced to less than 10% of wild-type; dbSNP:rs199689597." evidence="29">
    <original>A</original>
    <variation>V</variation>
    <location>
        <position position="44"/>
    </location>
</feature>
<feature type="sequence variant" id="VAR_079645" description="In CDSP; carnitine transport reduced to less than 5% of wild-type; dbSNP:rs377767445." evidence="29">
    <original>P</original>
    <variation>L</variation>
    <location>
        <position position="46"/>
    </location>
</feature>
<feature type="sequence variant" id="VAR_064113" description="In CDSP; carnitine transport is reduced to less than 5% of normal; dbSNP:rs202088921." evidence="19 24 26 28 29">
    <original>P</original>
    <variation>S</variation>
    <location>
        <position position="46"/>
    </location>
</feature>
<feature type="sequence variant" id="VAR_079646" description="In CDSP; loss of carnitine transport." evidence="29">
    <original>C</original>
    <variation>Y</variation>
    <location>
        <position position="50"/>
    </location>
</feature>
<feature type="sequence variant" id="VAR_064114" description="In CDSP; carnitine transport reduced to 2% of wild-type; dbSNP:rs1476076948." evidence="26 29">
    <original>T</original>
    <variation>P</variation>
    <location>
        <position position="66"/>
    </location>
</feature>
<feature type="sequence variant" id="VAR_064115" description="In CDSP; carnitine transport reduced to 2% of wild-type; dbSNP:rs757711838." evidence="26 29">
    <original>R</original>
    <variation>P</variation>
    <location>
        <position position="75"/>
    </location>
</feature>
<feature type="sequence variant" id="VAR_064116" description="In CDSP; loss of carnitine transport; dbSNP:rs72552726." evidence="16 17 24 26 28 29">
    <original>R</original>
    <variation>L</variation>
    <location>
        <position position="83"/>
    </location>
</feature>
<feature type="sequence variant" id="VAR_079647" description="In CDSP; loss of carnitine transport; dbSNP:rs386134190." evidence="29">
    <original>S</original>
    <variation>W</variation>
    <location>
        <position position="93"/>
    </location>
</feature>
<feature type="sequence variant" id="VAR_079648" description="In CDSP; uncertain significance; reduces carnitine transport but the mutant retains 30% of wild-type activity; dbSNP:rs386134191." evidence="29">
    <original>L</original>
    <variation>V</variation>
    <location>
        <position position="95"/>
    </location>
</feature>
<feature type="sequence variant" id="VAR_064117" description="In CDSP; carnitine transport reduced to 20% of wild-type; dbSNP:rs377767450." evidence="26 29">
    <original>G</original>
    <variation>A</variation>
    <location>
        <position position="96"/>
    </location>
</feature>
<feature type="sequence variant" id="VAR_079649" description="In CDSP; carnitine transport reduced to less than 5% of wild-type; dbSNP:rs386134192." evidence="29">
    <original>D</original>
    <variation>G</variation>
    <location>
        <position position="115"/>
    </location>
</feature>
<feature type="sequence variant" id="VAR_079650" description="In CDSP." evidence="29">
    <location>
        <begin position="117"/>
        <end position="557"/>
    </location>
</feature>
<feature type="sequence variant" id="VAR_064118" description="In CDSP; dbSNP:rs201082652." evidence="26">
    <original>D</original>
    <variation>Y</variation>
    <location>
        <position position="122"/>
    </location>
</feature>
<feature type="sequence variant" id="VAR_064119" description="In CDSP; carnitine transport reduced to less than 20% of wild-type; dbSNP:rs748605096." evidence="26 29">
    <original>V</original>
    <variation>G</variation>
    <location>
        <position position="123"/>
    </location>
</feature>
<feature type="sequence variant" id="VAR_079651" description="In CDSP; uncertain significance; may affect splicing; reduces carnitine transport but the mutant retains 30% of wild-type activity." evidence="29">
    <original>E</original>
    <variation>D</variation>
    <location>
        <position position="131"/>
    </location>
</feature>
<feature type="sequence variant" id="VAR_079652" description="In CDSP." evidence="29">
    <location>
        <begin position="132"/>
        <end position="557"/>
    </location>
</feature>
<feature type="sequence variant" id="VAR_079653" description="In CDSP." evidence="29">
    <location>
        <begin position="140"/>
        <end position="557"/>
    </location>
</feature>
<feature type="sequence variant" id="VAR_064120" description="In CDSP; uncertain significance; reduces carnitine transport but the mutant retains more than 25% of wild-type activity; dbSNP:rs151231558." evidence="24 26 28 29">
    <original>A</original>
    <variation>S</variation>
    <location>
        <position position="142"/>
    </location>
</feature>
<feature type="sequence variant" id="VAR_064121" description="In CDSP; carnitine transport reduced to less than 2% of wild-type; dbSNP:rs1178584184." evidence="25 26 29">
    <original>P</original>
    <variation>L</variation>
    <location>
        <position position="143"/>
    </location>
</feature>
<feature type="sequence variant" id="VAR_020348" description="In dbSNP:rs10040427." evidence="18">
    <original>L</original>
    <variation>F</variation>
    <location>
        <position position="144"/>
    </location>
</feature>
<feature type="sequence variant" id="VAR_079654" description="In CDSP; uncertain significance; reduces carnitine transport but the mutant retains more than 60% of wild-type activity; dbSNP:rs386134193." evidence="29">
    <original>V</original>
    <variation>M</variation>
    <location>
        <position position="151"/>
    </location>
</feature>
<feature type="sequence variant" id="VAR_079655" description="In CDSP; loss of carnitine transport; dbSNP:rs121908889." evidence="29">
    <original>R</original>
    <variation>P</variation>
    <location>
        <position position="169"/>
    </location>
</feature>
<feature type="sequence variant" id="VAR_009252" description="In CDSP; loss of carnitine transport; dbSNP:rs121908889." evidence="5 26 28 29">
    <original>R</original>
    <variation>Q</variation>
    <location>
        <position position="169"/>
    </location>
</feature>
<feature type="sequence variant" id="VAR_064122" description="In CDSP; loss of carnitine transport; dbSNP:rs121908890." evidence="14 17 26 28 29">
    <original>R</original>
    <variation>W</variation>
    <location>
        <position position="169"/>
    </location>
</feature>
<feature type="sequence variant" id="VAR_079656" description="In CDSP; carnitine transport reduced to less than 10% of wild-type; dbSNP:rs781721860." evidence="29">
    <original>V</original>
    <variation>M</variation>
    <location>
        <position position="175"/>
    </location>
</feature>
<feature type="sequence variant" id="VAR_064123" description="In CDSP; carnitine transport reduced to less than 20% of wild-type; dbSNP:rs145068530." evidence="26 29">
    <original>M</original>
    <variation>V</variation>
    <location>
        <position position="177"/>
    </location>
</feature>
<feature type="sequence variant" id="VAR_022564" description="In CDSP; uncertain significance; reduces carnitine transport but the mutant retains more than 40% of wild-type activity; dbSNP:rs386134196." evidence="9 29">
    <original>M</original>
    <variation>L</variation>
    <location>
        <position position="179"/>
    </location>
</feature>
<feature type="sequence variant" id="VAR_064124" description="In CDSP; loss of carnitine transport; dbSNP:rs386134197." evidence="26 29">
    <original>L</original>
    <variation>P</variation>
    <location>
        <position position="186"/>
    </location>
</feature>
<feature type="sequence variant" id="VAR_079657" description="In CDSP; loss of carnitine transport; dbSNP:rs796052033." evidence="29">
    <original>M</original>
    <variation>R</variation>
    <location>
        <position position="205"/>
    </location>
</feature>
<feature type="sequence variant" id="VAR_079658" description="In CDSP; loss of carnitine transport; dbSNP:rs386134198." evidence="29">
    <original>N</original>
    <variation>S</variation>
    <location>
        <position position="210"/>
    </location>
</feature>
<feature type="sequence variant" id="VAR_009253" description="In CDSP; loss of carnitine transport; dbSNP:rs121908888." evidence="7 29">
    <original>Y</original>
    <variation>C</variation>
    <location>
        <position position="211"/>
    </location>
</feature>
<feature type="sequence variant" id="VAR_064125" description="In CDSP; uncertain significance; reduces carnitine transport but the mutant retains 30% of wild-type activity; dbSNP:rs386134199." evidence="24 26 28 29">
    <original>A</original>
    <variation>V</variation>
    <location>
        <position position="214"/>
    </location>
</feature>
<feature type="sequence variant" id="VAR_079659" description="In CDSP; uncertain significance; reduces carnitine transport but the mutant retains 30% of wild-type activity." evidence="29">
    <original>T</original>
    <variation>K</variation>
    <location>
        <position position="219"/>
    </location>
</feature>
<feature type="sequence variant" id="VAR_079660" description="In CDSP; reduces carnitine transport to less than 20% of wild-type activity; dbSNP:rs386134205." evidence="29">
    <original>S</original>
    <variation>L</variation>
    <location>
        <position position="225"/>
    </location>
</feature>
<feature type="sequence variant" id="VAR_064126" description="In CDSP; reduces carnitine transport to less than 10% of wild-type activity; dbSNP:rs185551386." evidence="26 29">
    <original>R</original>
    <variation>H</variation>
    <location>
        <position position="227"/>
    </location>
</feature>
<feature type="sequence variant" id="VAR_064127" description="In CDSP; reduces carnitine transport to less than 1% of wild-type activity; dbSNP:rs756650860." evidence="26 29">
    <original>F</original>
    <variation>L</variation>
    <location>
        <position position="230"/>
    </location>
</feature>
<feature type="sequence variant" id="VAR_079661" description="In CDSP; loss of carnitine transport; dbSNP:rs386134206." evidence="29">
    <original>S</original>
    <variation>F</variation>
    <location>
        <position position="231"/>
    </location>
</feature>
<feature type="sequence variant" id="VAR_064128" description="In CDSP; reduces carnitine transport to less than 20% of wild-type activity; dbSNP:rs114269482." evidence="17 24 26 28 29">
    <original>T</original>
    <variation>M</variation>
    <location>
        <position position="232"/>
    </location>
</feature>
<feature type="sequence variant" id="VAR_064129" description="In CDSP; dbSNP:rs1457258524." evidence="25">
    <original>G</original>
    <variation>R</variation>
    <location>
        <position position="234"/>
    </location>
</feature>
<feature type="sequence variant" id="VAR_064130" description="In CDSP; reduces carnitine transport to less than 2% of wild-type activity." evidence="26 29">
    <original>A</original>
    <variation>T</variation>
    <location>
        <position position="240"/>
    </location>
</feature>
<feature type="sequence variant" id="VAR_064131" description="In CDSP; loss of carnitine transport; dbSNP:rs72552728." evidence="14 17 29">
    <original>G</original>
    <variation>V</variation>
    <location>
        <position position="242"/>
    </location>
</feature>
<feature type="sequence variant" id="VAR_079662" description="In CDSP; loss of carnitine transport; dbSNP:rs2126783802." evidence="29">
    <original>P</original>
    <variation>R</variation>
    <location>
        <position position="247"/>
    </location>
</feature>
<feature type="sequence variant" id="VAR_079663" description="In CDSP." evidence="29">
    <location>
        <begin position="254"/>
        <end position="557"/>
    </location>
</feature>
<feature type="sequence variant" id="VAR_079664" description="In CDSP; uncertain significance; reduces carnitine transport but the mutant retains more than 30% of wild-type activity; dbSNP:rs200699819." evidence="29">
    <original>R</original>
    <variation>Q</variation>
    <location>
        <position position="254"/>
    </location>
</feature>
<feature type="sequence variant" id="VAR_079665" description="In CDSP." evidence="29">
    <location>
        <begin position="256"/>
        <end position="557"/>
    </location>
</feature>
<feature type="sequence variant" id="VAR_064132" description="In CDSP; reduces carnitine transport to less than 10% of wild-type activity; dbSNP:rs386134203." evidence="26 29">
    <original>R</original>
    <variation>W</variation>
    <location>
        <position position="257"/>
    </location>
</feature>
<feature type="sequence variant" id="VAR_079666" description="In CDSP; uncertain significance; reduces carnitine transport but the mutant retains more than 40% of wild-type activity; dbSNP:rs201262157." evidence="29">
    <original>T</original>
    <variation>M</variation>
    <location>
        <position position="264"/>
    </location>
</feature>
<feature type="sequence variant" id="VAR_064133" description="In CDSP; reduces carnitine transport to less than 5% of wild-type activity; dbSNP:rs201262157." evidence="26 29">
    <original>T</original>
    <variation>R</variation>
    <location>
        <position position="264"/>
    </location>
</feature>
<feature type="sequence variant" id="VAR_079667" description="In CDSP; uncertain significance; reduces carnitine transport but the mutant retains more than 40% of wild-type activity; dbSNP:rs1752496410." evidence="29">
    <original>L</original>
    <variation>P</variation>
    <location>
        <position position="269"/>
    </location>
</feature>
<feature type="sequence variant" id="VAR_079668" description="In CDSP." evidence="29">
    <location>
        <begin position="275"/>
        <end position="557"/>
    </location>
</feature>
<feature type="sequence variant" id="VAR_066844" description="In CDSP; reduces carnitine transport to less than 1% of wild-type activity; dbSNP:rs386134208." evidence="28 29">
    <original>S</original>
    <variation>F</variation>
    <location>
        <position position="280"/>
    </location>
</feature>
<feature type="sequence variant" id="VAR_079669" description="In CDSP." evidence="29">
    <location>
        <begin position="282"/>
        <end position="557"/>
    </location>
</feature>
<feature type="sequence variant" id="VAR_064134" description="In CDSP; reduces carnitine transport to 5% of wild-type activity; dbSNP:rs386134210." evidence="25 26 28 29">
    <original>R</original>
    <variation>Q</variation>
    <location>
        <position position="282"/>
    </location>
</feature>
<feature type="sequence variant" id="VAR_022565" description="In CDSP; loss of carnitine transport; dbSNP:rs386134211." evidence="9 29">
    <original>W</original>
    <variation>C</variation>
    <location>
        <position position="283"/>
    </location>
</feature>
<feature type="sequence variant" id="VAR_009254" description="In CDSP; reduces carnitine transport to less than 1% of wild-type activity; dbSNP:rs72552729." evidence="11 28 29">
    <original>W</original>
    <variation>R</variation>
    <location>
        <position position="283"/>
    </location>
</feature>
<feature type="sequence variant" id="VAR_079670" description="In CDSP; dbSNP:rs1554087707." evidence="29">
    <location>
        <begin position="289"/>
        <end position="557"/>
    </location>
</feature>
<feature type="sequence variant" id="VAR_079671" description="In CDSP." evidence="29">
    <location>
        <begin position="295"/>
        <end position="557"/>
    </location>
</feature>
<feature type="sequence variant" id="VAR_064135" description="In CDSP; reduces carnitine transport to less-than-1% to 3% of wild-type activity; dbSNP:rs72552730." evidence="14 17 29">
    <original>A</original>
    <variation>D</variation>
    <location>
        <position position="301"/>
    </location>
</feature>
<feature type="sequence variant" id="VAR_064136" description="In CDSP; uncertain significance; reduces carnitine transport but the mutant retains 70% of wild-type activity; dbSNP:rs77300588." evidence="26 29">
    <original>I</original>
    <variation>V</variation>
    <location>
        <position position="312"/>
    </location>
</feature>
<feature type="sequence variant" id="VAR_079672" description="In CDSP; uncertain significance; no effect on carnitine transport; dbSNP:rs774792831." evidence="29">
    <original>E</original>
    <variation>K</variation>
    <location>
        <position position="317"/>
    </location>
</feature>
<feature type="sequence variant" id="VAR_079673" description="In CDSP." evidence="29">
    <location>
        <begin position="319"/>
        <end position="557"/>
    </location>
</feature>
<feature type="sequence variant" id="VAR_079674" description="In CDSP; uncertain significance; reduces carnitine transport but the mutant retains 60% of wild-type activity; dbSNP:rs150544263." evidence="29">
    <original>I</original>
    <variation>T</variation>
    <location>
        <position position="348"/>
    </location>
</feature>
<feature type="sequence variant" id="VAR_064137" description="In CDSP; loss of carnitine transport; dbSNP:rs68018207." evidence="14 17 28 29">
    <original>W</original>
    <variation>R</variation>
    <location>
        <position position="351"/>
    </location>
</feature>
<feature type="sequence variant" id="VAR_064138" description="In CDSP; reduces carnitine transport to less than 2% of wild-type activity; dbSNP:rs1385634398." evidence="26 29">
    <original>S</original>
    <variation>L</variation>
    <location>
        <position position="355"/>
    </location>
</feature>
<feature type="sequence variant" id="VAR_064139" description="In CDSP; loss of carnitine transport; dbSNP:rs61731073." evidence="26 29">
    <original>Y</original>
    <variation>N</variation>
    <location>
        <position position="358"/>
    </location>
</feature>
<feature type="sequence variant" id="VAR_064140" description="In CDSP; dbSNP:rs886042092." evidence="25">
    <original>S</original>
    <variation>L</variation>
    <location>
        <position position="362"/>
    </location>
</feature>
<feature type="sequence variant" id="VAR_079675" description="In CDSP; loss of carnitine transport; dbSNP:rs386134214." evidence="29">
    <original>L</original>
    <variation>P</variation>
    <location>
        <position position="363"/>
    </location>
</feature>
<feature type="sequence variant" id="VAR_079676" description="In CDSP." evidence="29">
    <location>
        <begin position="387"/>
        <end position="557"/>
    </location>
</feature>
<feature type="sequence variant" id="VAR_079677" description="In CDSP; reduces carnitine transport to 5% of wild-type activity." evidence="29">
    <location>
        <position position="394"/>
    </location>
</feature>
<feature type="sequence variant" id="VAR_064141" description="In CDSP; reduces carnitine transport to less than 1% of wild-type activity; dbSNP:rs144547521." evidence="26 29">
    <original>P</original>
    <variation>L</variation>
    <location>
        <position position="398"/>
    </location>
</feature>
<feature type="sequence variant" id="VAR_064142" description="In CDSP; carnitine transport is reduced to less than 1% of normal; dbSNP:rs121908891." evidence="15 17 29">
    <original>R</original>
    <variation>Q</variation>
    <location>
        <position position="399"/>
    </location>
</feature>
<feature type="sequence variant" id="VAR_064143" description="In CDSP; reduces carnitine transport to less than 5% of wild-type activity; dbSNP:rs267607054." evidence="24 26 29">
    <original>R</original>
    <variation>W</variation>
    <location>
        <position position="399"/>
    </location>
</feature>
<feature type="sequence variant" id="VAR_079678" description="In CDSP; uncertain significance; no effect on carnitine transport." evidence="29">
    <original>S</original>
    <variation>G</variation>
    <location>
        <position position="412"/>
    </location>
</feature>
<feature type="sequence variant" id="VAR_079679" description="In CDSP; reduces carnitine transport to less than 1% of wild-type activity." evidence="29">
    <original>V</original>
    <variation>G</variation>
    <location>
        <position position="439"/>
    </location>
</feature>
<feature type="sequence variant" id="VAR_064144" description="In CDSP; loss of carnitine transport; dbSNP:rs72552732." evidence="26 28 29">
    <original>T</original>
    <variation>M</variation>
    <location>
        <position position="440"/>
    </location>
</feature>
<feature type="sequence variant" id="VAR_064145" description="In CDSP; reduces carnitine transport to less than 20% of wild-type activity; requires 2 nucleotide substitutions; dbSNP:rs267607053." evidence="24 26 28 29">
    <original>A</original>
    <variation>I</variation>
    <location>
        <position position="442"/>
    </location>
</feature>
<feature type="sequence variant" id="VAR_064146" description="In CDSP; reduces carnitine transport to less than 1% of wild-type." evidence="26 29">
    <original>F</original>
    <variation>V</variation>
    <location>
        <position position="443"/>
    </location>
</feature>
<feature type="sequence variant" id="VAR_009255" description="In CDSP; reduces carnitine transport to less than 1% of wild-type; dbSNP:rs72552733." evidence="11 28 29">
    <original>V</original>
    <variation>F</variation>
    <location>
        <position position="446"/>
    </location>
</feature>
<feature type="sequence variant" id="VAR_064147" description="In CDSP; loss of carnitine transport; dbSNP:rs386134218." evidence="17 28 29">
    <original>Y</original>
    <variation>C</variation>
    <location>
        <position position="447"/>
    </location>
</feature>
<feature type="sequence variant" id="VAR_079680" description="In CDSP; reduces carnitine transport to less than 20% of wild-type; dbSNP:rs386134219." evidence="29">
    <original>V</original>
    <variation>L</variation>
    <location>
        <position position="448"/>
    </location>
</feature>
<feature type="sequence variant" id="VAR_029315" description="In CDSP; uncertain significance; reduces carnitine transport to less than 20% of wild-type; dbSNP:rs11568514." evidence="17 18 26 29">
    <original>Y</original>
    <variation>D</variation>
    <location>
        <position position="449"/>
    </location>
</feature>
<feature type="sequence variant" id="VAR_009256" description="In CDSP; reduces carnitine transport to less than 5% of wild-type; dbSNP:rs72552734." evidence="12 17 26 29">
    <original>E</original>
    <variation>K</variation>
    <location>
        <position position="452"/>
    </location>
</feature>
<feature type="sequence variant" id="VAR_064148" description="In CDSP; loss of carnitine transport; dbSNP:rs1408166345." evidence="26 29">
    <original>P</original>
    <variation>R</variation>
    <location>
        <position position="455"/>
    </location>
</feature>
<feature type="sequence variant" id="VAR_079681" description="In CDSP; reduces carnitine transport to less than 5% of wild-type." evidence="29">
    <original>G</original>
    <variation>V</variation>
    <location>
        <position position="462"/>
    </location>
</feature>
<feature type="sequence variant" id="VAR_022566" description="In CDSP; reduces carnitine transport to less than 20% of wild-type activity; dbSNP:rs60376624." evidence="9 19 25 26 28 29">
    <original>S</original>
    <variation>C</variation>
    <location>
        <position position="467"/>
    </location>
</feature>
<feature type="sequence variant" id="VAR_064149" description="In CDSP; markedly reduced carnitine transport compared to the wild-type protein; less than 1% of wild-type activity; dbSNP:rs386134221." evidence="17 29">
    <original>T</original>
    <variation>R</variation>
    <location>
        <position position="468"/>
    </location>
</feature>
<feature type="sequence variant" id="VAR_079682" description="In CDSP; loss of carnitine transport; dbSNP:rs386134222." evidence="29">
    <original>S</original>
    <variation>F</variation>
    <location>
        <position position="470"/>
    </location>
</feature>
<feature type="sequence variant" id="VAR_064150" description="In CDSP; dbSNP:rs749282641." evidence="25">
    <original>R</original>
    <variation>C</variation>
    <location>
        <position position="471"/>
    </location>
</feature>
<feature type="sequence variant" id="VAR_079683" description="In CDSP; reduces carnitine transport to less than 2% of wild-type; dbSNP:rs386134223." evidence="29">
    <original>R</original>
    <variation>H</variation>
    <location>
        <position position="471"/>
    </location>
</feature>
<feature type="sequence variant" id="VAR_066845" description="In CDSP; loss of carnitine transport; dbSNP:rs386134223." evidence="28 29">
    <original>R</original>
    <variation>P</variation>
    <location>
        <position position="471"/>
    </location>
</feature>
<feature type="sequence variant" id="VAR_079684" description="In CDSP; loss of carnitine transport." evidence="29">
    <original>L</original>
    <variation>R</variation>
    <location>
        <position position="476"/>
    </location>
</feature>
<feature type="sequence variant" id="VAR_009257" description="In CDSP; loss of carnitine transport but stimulated organic cation transport; no effect on protein expression; dbSNP:rs72552735." evidence="4 6 10 29">
    <original>P</original>
    <variation>L</variation>
    <location>
        <position position="478"/>
    </location>
</feature>
<feature type="sequence variant" id="VAR_020349" description="Reduces carnitine transport but the mutant retains more than 60% of wild-type activity; dbSNP:rs11568513." evidence="18 29">
    <original>V</original>
    <variation>F</variation>
    <location>
        <position position="481"/>
    </location>
</feature>
<feature type="sequence variant" id="VAR_036816" description="In dbSNP:rs11568513." evidence="18">
    <original>V</original>
    <variation>I</variation>
    <location>
        <position position="481"/>
    </location>
</feature>
<feature type="sequence variant" id="VAR_064151" description="In CDSP; reduces carnitine transport to less than 10% of wild-type; dbSNP:rs377216516." evidence="19 26 29">
    <original>R</original>
    <variation>C</variation>
    <location>
        <position position="488"/>
    </location>
</feature>
<feature type="sequence variant" id="VAR_066846" description="In CDSP; uncertain significance; reduces carnitine transport to 40% of wild-type; dbSNP:rs28383481." evidence="28 29">
    <original>R</original>
    <variation>H</variation>
    <location>
        <position position="488"/>
    </location>
</feature>
<feature type="sequence variant" id="VAR_064152" description="In CDSP; reduces carnitine transport to 5% of wild-type; dbSNP:rs1157198543." evidence="26 29">
    <original>L</original>
    <variation>S</variation>
    <location>
        <position position="507"/>
    </location>
</feature>
<feature type="sequence variant" id="VAR_029316" description="In dbSNP:rs11568521." evidence="18">
    <original>F</original>
    <variation>L</variation>
    <location>
        <position position="508"/>
    </location>
</feature>
<feature type="sequence variant" id="VAR_029317" description="In dbSNP:rs11568524." evidence="18">
    <original>M</original>
    <variation>V</variation>
    <location>
        <position position="530"/>
    </location>
</feature>
<feature type="sequence variant" id="VAR_020350" description="Reduces carnitine transport but the mutant retains more than 20% of wild-type activity; dbSNP:rs11568525." evidence="18 26 29">
    <original>P</original>
    <variation>S</variation>
    <location>
        <position position="549"/>
    </location>
</feature>
<feature type="mutagenesis site" description="Reduces expression to 50%. No effect on carnitine transporter activity." evidence="20">
    <original>N</original>
    <variation>Q</variation>
    <location>
        <position position="91"/>
    </location>
</feature>
<feature type="mutagenesis site" description="Loss of both carnitine and organic cation transport functionalities. No effect on protein expression." evidence="6 10">
    <original>M</original>
    <variation>R</variation>
    <location>
        <position position="352"/>
    </location>
</feature>
<feature type="sequence conflict" description="In Ref. 8; AAH12325." evidence="37" ref="8">
    <original>L</original>
    <variation>P</variation>
    <location>
        <position position="114"/>
    </location>
</feature>
<gene>
    <name evidence="40" type="primary">SLC22A5</name>
    <name evidence="33 34" type="synonym">OCTN2</name>
</gene>
<name>S22A5_HUMAN</name>